<reference key="1">
    <citation type="journal article" date="1994" name="FEBS Lett.">
        <title>Cloning and expression of a novel form of leukotriene B4 omega-hydroxylase from human liver.</title>
        <authorList>
            <person name="Kikuta Y."/>
            <person name="Kusunose E."/>
            <person name="Kondo T."/>
            <person name="Yamamoto S."/>
            <person name="Kinoshita H."/>
            <person name="Kusunose M."/>
        </authorList>
    </citation>
    <scope>NUCLEOTIDE SEQUENCE [MRNA] (ISOFORM 1)</scope>
    <scope>FUNCTION</scope>
    <scope>CATALYTIC ACTIVITY</scope>
    <scope>SUBCELLULAR LOCATION</scope>
    <source>
        <tissue>Liver</tissue>
    </source>
</reference>
<reference key="2">
    <citation type="journal article" date="1999" name="DNA Cell Biol.">
        <title>Expression and molecular cloning of human liver leukotriene B4 omega-hydroxylase (CYP4F2) gene.</title>
        <authorList>
            <person name="Kikuta Y."/>
            <person name="Miyauchi Y."/>
            <person name="Kusunose E."/>
            <person name="Kusunose M."/>
        </authorList>
    </citation>
    <scope>NUCLEOTIDE SEQUENCE [GENOMIC DNA]</scope>
    <scope>TISSUE SPECIFICITY</scope>
</reference>
<reference key="3">
    <citation type="submission" date="2000-07" db="EMBL/GenBank/DDBJ databases">
        <title>The human liver CYP4F2 cDNA sequence and expression in baculovirus-infected insect cells.</title>
        <authorList>
            <person name="Chen L."/>
            <person name="Hardwick J.P."/>
        </authorList>
    </citation>
    <scope>NUCLEOTIDE SEQUENCE [MRNA] (ISOFORM 1)</scope>
    <source>
        <tissue>Liver</tissue>
    </source>
</reference>
<reference key="4">
    <citation type="journal article" date="2004" name="Nat. Genet.">
        <title>Complete sequencing and characterization of 21,243 full-length human cDNAs.</title>
        <authorList>
            <person name="Ota T."/>
            <person name="Suzuki Y."/>
            <person name="Nishikawa T."/>
            <person name="Otsuki T."/>
            <person name="Sugiyama T."/>
            <person name="Irie R."/>
            <person name="Wakamatsu A."/>
            <person name="Hayashi K."/>
            <person name="Sato H."/>
            <person name="Nagai K."/>
            <person name="Kimura K."/>
            <person name="Makita H."/>
            <person name="Sekine M."/>
            <person name="Obayashi M."/>
            <person name="Nishi T."/>
            <person name="Shibahara T."/>
            <person name="Tanaka T."/>
            <person name="Ishii S."/>
            <person name="Yamamoto J."/>
            <person name="Saito K."/>
            <person name="Kawai Y."/>
            <person name="Isono Y."/>
            <person name="Nakamura Y."/>
            <person name="Nagahari K."/>
            <person name="Murakami K."/>
            <person name="Yasuda T."/>
            <person name="Iwayanagi T."/>
            <person name="Wagatsuma M."/>
            <person name="Shiratori A."/>
            <person name="Sudo H."/>
            <person name="Hosoiri T."/>
            <person name="Kaku Y."/>
            <person name="Kodaira H."/>
            <person name="Kondo H."/>
            <person name="Sugawara M."/>
            <person name="Takahashi M."/>
            <person name="Kanda K."/>
            <person name="Yokoi T."/>
            <person name="Furuya T."/>
            <person name="Kikkawa E."/>
            <person name="Omura Y."/>
            <person name="Abe K."/>
            <person name="Kamihara K."/>
            <person name="Katsuta N."/>
            <person name="Sato K."/>
            <person name="Tanikawa M."/>
            <person name="Yamazaki M."/>
            <person name="Ninomiya K."/>
            <person name="Ishibashi T."/>
            <person name="Yamashita H."/>
            <person name="Murakawa K."/>
            <person name="Fujimori K."/>
            <person name="Tanai H."/>
            <person name="Kimata M."/>
            <person name="Watanabe M."/>
            <person name="Hiraoka S."/>
            <person name="Chiba Y."/>
            <person name="Ishida S."/>
            <person name="Ono Y."/>
            <person name="Takiguchi S."/>
            <person name="Watanabe S."/>
            <person name="Yosida M."/>
            <person name="Hotuta T."/>
            <person name="Kusano J."/>
            <person name="Kanehori K."/>
            <person name="Takahashi-Fujii A."/>
            <person name="Hara H."/>
            <person name="Tanase T.-O."/>
            <person name="Nomura Y."/>
            <person name="Togiya S."/>
            <person name="Komai F."/>
            <person name="Hara R."/>
            <person name="Takeuchi K."/>
            <person name="Arita M."/>
            <person name="Imose N."/>
            <person name="Musashino K."/>
            <person name="Yuuki H."/>
            <person name="Oshima A."/>
            <person name="Sasaki N."/>
            <person name="Aotsuka S."/>
            <person name="Yoshikawa Y."/>
            <person name="Matsunawa H."/>
            <person name="Ichihara T."/>
            <person name="Shiohata N."/>
            <person name="Sano S."/>
            <person name="Moriya S."/>
            <person name="Momiyama H."/>
            <person name="Satoh N."/>
            <person name="Takami S."/>
            <person name="Terashima Y."/>
            <person name="Suzuki O."/>
            <person name="Nakagawa S."/>
            <person name="Senoh A."/>
            <person name="Mizoguchi H."/>
            <person name="Goto Y."/>
            <person name="Shimizu F."/>
            <person name="Wakebe H."/>
            <person name="Hishigaki H."/>
            <person name="Watanabe T."/>
            <person name="Sugiyama A."/>
            <person name="Takemoto M."/>
            <person name="Kawakami B."/>
            <person name="Yamazaki M."/>
            <person name="Watanabe K."/>
            <person name="Kumagai A."/>
            <person name="Itakura S."/>
            <person name="Fukuzumi Y."/>
            <person name="Fujimori Y."/>
            <person name="Komiyama M."/>
            <person name="Tashiro H."/>
            <person name="Tanigami A."/>
            <person name="Fujiwara T."/>
            <person name="Ono T."/>
            <person name="Yamada K."/>
            <person name="Fujii Y."/>
            <person name="Ozaki K."/>
            <person name="Hirao M."/>
            <person name="Ohmori Y."/>
            <person name="Kawabata A."/>
            <person name="Hikiji T."/>
            <person name="Kobatake N."/>
            <person name="Inagaki H."/>
            <person name="Ikema Y."/>
            <person name="Okamoto S."/>
            <person name="Okitani R."/>
            <person name="Kawakami T."/>
            <person name="Noguchi S."/>
            <person name="Itoh T."/>
            <person name="Shigeta K."/>
            <person name="Senba T."/>
            <person name="Matsumura K."/>
            <person name="Nakajima Y."/>
            <person name="Mizuno T."/>
            <person name="Morinaga M."/>
            <person name="Sasaki M."/>
            <person name="Togashi T."/>
            <person name="Oyama M."/>
            <person name="Hata H."/>
            <person name="Watanabe M."/>
            <person name="Komatsu T."/>
            <person name="Mizushima-Sugano J."/>
            <person name="Satoh T."/>
            <person name="Shirai Y."/>
            <person name="Takahashi Y."/>
            <person name="Nakagawa K."/>
            <person name="Okumura K."/>
            <person name="Nagase T."/>
            <person name="Nomura N."/>
            <person name="Kikuchi H."/>
            <person name="Masuho Y."/>
            <person name="Yamashita R."/>
            <person name="Nakai K."/>
            <person name="Yada T."/>
            <person name="Nakamura Y."/>
            <person name="Ohara O."/>
            <person name="Isogai T."/>
            <person name="Sugano S."/>
        </authorList>
    </citation>
    <scope>NUCLEOTIDE SEQUENCE [LARGE SCALE MRNA] (ISOFORMS 1 AND 2)</scope>
    <scope>VARIANT VAL-185</scope>
    <source>
        <tissue>Kidney</tissue>
        <tissue>Small intestine</tissue>
    </source>
</reference>
<reference key="5">
    <citation type="submission" date="2002-01" db="EMBL/GenBank/DDBJ databases">
        <authorList>
            <consortium name="SeattleSNPs variation discovery resource"/>
        </authorList>
    </citation>
    <scope>NUCLEOTIDE SEQUENCE [GENOMIC DNA]</scope>
    <scope>VARIANTS TYR-7; GLY-12; VAL-185; MET-433 AND MET-519</scope>
</reference>
<reference key="6">
    <citation type="journal article" date="2004" name="Nature">
        <title>The DNA sequence and biology of human chromosome 19.</title>
        <authorList>
            <person name="Grimwood J."/>
            <person name="Gordon L.A."/>
            <person name="Olsen A.S."/>
            <person name="Terry A."/>
            <person name="Schmutz J."/>
            <person name="Lamerdin J.E."/>
            <person name="Hellsten U."/>
            <person name="Goodstein D."/>
            <person name="Couronne O."/>
            <person name="Tran-Gyamfi M."/>
            <person name="Aerts A."/>
            <person name="Altherr M."/>
            <person name="Ashworth L."/>
            <person name="Bajorek E."/>
            <person name="Black S."/>
            <person name="Branscomb E."/>
            <person name="Caenepeel S."/>
            <person name="Carrano A.V."/>
            <person name="Caoile C."/>
            <person name="Chan Y.M."/>
            <person name="Christensen M."/>
            <person name="Cleland C.A."/>
            <person name="Copeland A."/>
            <person name="Dalin E."/>
            <person name="Dehal P."/>
            <person name="Denys M."/>
            <person name="Detter J.C."/>
            <person name="Escobar J."/>
            <person name="Flowers D."/>
            <person name="Fotopulos D."/>
            <person name="Garcia C."/>
            <person name="Georgescu A.M."/>
            <person name="Glavina T."/>
            <person name="Gomez M."/>
            <person name="Gonzales E."/>
            <person name="Groza M."/>
            <person name="Hammon N."/>
            <person name="Hawkins T."/>
            <person name="Haydu L."/>
            <person name="Ho I."/>
            <person name="Huang W."/>
            <person name="Israni S."/>
            <person name="Jett J."/>
            <person name="Kadner K."/>
            <person name="Kimball H."/>
            <person name="Kobayashi A."/>
            <person name="Larionov V."/>
            <person name="Leem S.-H."/>
            <person name="Lopez F."/>
            <person name="Lou Y."/>
            <person name="Lowry S."/>
            <person name="Malfatti S."/>
            <person name="Martinez D."/>
            <person name="McCready P.M."/>
            <person name="Medina C."/>
            <person name="Morgan J."/>
            <person name="Nelson K."/>
            <person name="Nolan M."/>
            <person name="Ovcharenko I."/>
            <person name="Pitluck S."/>
            <person name="Pollard M."/>
            <person name="Popkie A.P."/>
            <person name="Predki P."/>
            <person name="Quan G."/>
            <person name="Ramirez L."/>
            <person name="Rash S."/>
            <person name="Retterer J."/>
            <person name="Rodriguez A."/>
            <person name="Rogers S."/>
            <person name="Salamov A."/>
            <person name="Salazar A."/>
            <person name="She X."/>
            <person name="Smith D."/>
            <person name="Slezak T."/>
            <person name="Solovyev V."/>
            <person name="Thayer N."/>
            <person name="Tice H."/>
            <person name="Tsai M."/>
            <person name="Ustaszewska A."/>
            <person name="Vo N."/>
            <person name="Wagner M."/>
            <person name="Wheeler J."/>
            <person name="Wu K."/>
            <person name="Xie G."/>
            <person name="Yang J."/>
            <person name="Dubchak I."/>
            <person name="Furey T.S."/>
            <person name="DeJong P."/>
            <person name="Dickson M."/>
            <person name="Gordon D."/>
            <person name="Eichler E.E."/>
            <person name="Pennacchio L.A."/>
            <person name="Richardson P."/>
            <person name="Stubbs L."/>
            <person name="Rokhsar D.S."/>
            <person name="Myers R.M."/>
            <person name="Rubin E.M."/>
            <person name="Lucas S.M."/>
        </authorList>
    </citation>
    <scope>NUCLEOTIDE SEQUENCE [LARGE SCALE GENOMIC DNA]</scope>
</reference>
<reference key="7">
    <citation type="submission" date="2005-07" db="EMBL/GenBank/DDBJ databases">
        <authorList>
            <person name="Mural R.J."/>
            <person name="Istrail S."/>
            <person name="Sutton G.G."/>
            <person name="Florea L."/>
            <person name="Halpern A.L."/>
            <person name="Mobarry C.M."/>
            <person name="Lippert R."/>
            <person name="Walenz B."/>
            <person name="Shatkay H."/>
            <person name="Dew I."/>
            <person name="Miller J.R."/>
            <person name="Flanigan M.J."/>
            <person name="Edwards N.J."/>
            <person name="Bolanos R."/>
            <person name="Fasulo D."/>
            <person name="Halldorsson B.V."/>
            <person name="Hannenhalli S."/>
            <person name="Turner R."/>
            <person name="Yooseph S."/>
            <person name="Lu F."/>
            <person name="Nusskern D.R."/>
            <person name="Shue B.C."/>
            <person name="Zheng X.H."/>
            <person name="Zhong F."/>
            <person name="Delcher A.L."/>
            <person name="Huson D.H."/>
            <person name="Kravitz S.A."/>
            <person name="Mouchard L."/>
            <person name="Reinert K."/>
            <person name="Remington K.A."/>
            <person name="Clark A.G."/>
            <person name="Waterman M.S."/>
            <person name="Eichler E.E."/>
            <person name="Adams M.D."/>
            <person name="Hunkapiller M.W."/>
            <person name="Myers E.W."/>
            <person name="Venter J.C."/>
        </authorList>
    </citation>
    <scope>NUCLEOTIDE SEQUENCE [LARGE SCALE GENOMIC DNA]</scope>
</reference>
<reference key="8">
    <citation type="journal article" date="2004" name="Genome Res.">
        <title>The status, quality, and expansion of the NIH full-length cDNA project: the Mammalian Gene Collection (MGC).</title>
        <authorList>
            <consortium name="The MGC Project Team"/>
        </authorList>
    </citation>
    <scope>NUCLEOTIDE SEQUENCE [LARGE SCALE MRNA] (ISOFORM 1)</scope>
    <scope>VARIANTS GLY-12 AND MET-433</scope>
</reference>
<reference key="9">
    <citation type="journal article" date="2000" name="Arch. Biochem. Biophys.">
        <title>Promoter activity and regulation of the CYP4F2 leukotriene B4 omega hydroxylase gene by peroxisomal proliferators and retinoic acid in HepG2 cells.</title>
        <authorList>
            <person name="Zhang X."/>
            <person name="Chen L."/>
            <person name="Hardwick J.P."/>
        </authorList>
    </citation>
    <scope>NUCLEOTIDE SEQUENCE [GENOMIC DNA] OF 1-175</scope>
    <source>
        <tissue>Liver</tissue>
    </source>
</reference>
<reference key="10">
    <citation type="journal article" date="1998" name="Arch. Biochem. Biophys.">
        <title>Role of human CYP4F2 in hepatic catabolism of the proinflammatory agent leukotriene B4.</title>
        <authorList>
            <person name="Jin R."/>
            <person name="Koop D.R."/>
            <person name="Raucy J.L."/>
            <person name="Lasker J.M."/>
        </authorList>
    </citation>
    <scope>PROTEIN SEQUENCE OF 5-21</scope>
    <scope>FUNCTION</scope>
    <scope>CATALYTIC ACTIVITY</scope>
    <scope>VARIANT GLY-12</scope>
</reference>
<reference key="11">
    <citation type="journal article" date="2000" name="J. Biochem.">
        <title>Characterization of human liver leukotriene B(4) omega-hydroxylase P450 (CYP4F2).</title>
        <authorList>
            <person name="Kikuta Y."/>
            <person name="Kusunose E."/>
            <person name="Kusunose M."/>
        </authorList>
    </citation>
    <scope>FUNCTION</scope>
    <scope>CATALYTIC ACTIVITY</scope>
    <scope>BIOPHYSICOCHEMICAL PROPERTIES</scope>
    <scope>PATHWAY</scope>
</reference>
<reference key="12">
    <citation type="journal article" date="2000" name="J. Biol. Chem.">
        <title>Formation of 20-hydroxyeicosatetraenoic acid, a vasoactive and natriuretic eicosanoid, in human kidney. Role of CYP4F2 and CYP4A11.</title>
        <authorList>
            <person name="Lasker J.M."/>
            <person name="Chen W.B."/>
            <person name="Wolf I."/>
            <person name="Bloswick B.P."/>
            <person name="Wilson P.D."/>
            <person name="Powell P.K."/>
        </authorList>
    </citation>
    <scope>FUNCTION</scope>
    <scope>CATALYTIC ACTIVITY</scope>
    <scope>TISSUE SPECIFICITY</scope>
</reference>
<reference key="13">
    <citation type="journal article" date="2002" name="J. Biol. Chem.">
        <title>Cytochrome P450 omega-hydroxylase pathway of tocopherol catabolism. Novel mechanism of regulation of vitamin E status.</title>
        <authorList>
            <person name="Sontag T.J."/>
            <person name="Parker R.S."/>
        </authorList>
    </citation>
    <scope>FUNCTION</scope>
    <scope>CATALYTIC ACTIVITY</scope>
    <scope>ACTIVITY REGULATION</scope>
    <scope>BIOPHYSICOCHEMICAL PROPERTIES</scope>
</reference>
<reference key="14">
    <citation type="journal article" date="2004" name="J. Lipid Res.">
        <title>Human CYP4F3s are the main catalysts in the oxidation of fatty acid epoxides.</title>
        <authorList>
            <person name="Le Quere V."/>
            <person name="Plee-Gautier E."/>
            <person name="Potin P."/>
            <person name="Madec S."/>
            <person name="Salauen J.P."/>
        </authorList>
    </citation>
    <scope>FUNCTION</scope>
    <scope>CATALYTIC ACTIVITY</scope>
    <scope>BIOPHYSICOCHEMICAL PROPERTIES</scope>
</reference>
<reference key="15">
    <citation type="journal article" date="2006" name="J. Biol. Chem.">
        <title>Omega-oxidation of very long-chain fatty acids in human liver microsomes. Implications for X-linked adrenoleukodystrophy.</title>
        <authorList>
            <person name="Sanders R.J."/>
            <person name="Ofman R."/>
            <person name="Duran M."/>
            <person name="Kemp S."/>
            <person name="Wanders R.J."/>
        </authorList>
    </citation>
    <scope>FUNCTION</scope>
    <scope>CATALYTIC ACTIVITY</scope>
    <scope>BIOPHYSICOCHEMICAL PROPERTIES</scope>
</reference>
<reference key="16">
    <citation type="journal article" date="2007" name="Physiol. Genomics">
        <title>Functional polymorphism in human CYP4F2 decreases 20-HETE production.</title>
        <authorList>
            <person name="Stec D.E."/>
            <person name="Roman R.J."/>
            <person name="Flasch A."/>
            <person name="Rieder M.J."/>
        </authorList>
    </citation>
    <scope>FUNCTION</scope>
    <scope>CATALYTIC ACTIVITY</scope>
    <scope>CHARACTERIZATION OF VARIANT MET-433</scope>
</reference>
<reference key="17">
    <citation type="journal article" date="2008" name="FASEB J.">
        <title>Characterization of the human omega-oxidation pathway for omega-hydroxy-very-long-chain fatty acids.</title>
        <authorList>
            <person name="Sanders R.J."/>
            <person name="Ofman R."/>
            <person name="Dacremont G."/>
            <person name="Wanders R.J."/>
            <person name="Kemp S."/>
        </authorList>
    </citation>
    <scope>FUNCTION</scope>
    <scope>CATALYTIC ACTIVITY</scope>
    <scope>BIOPHYSICOCHEMICAL PROPERTIES</scope>
</reference>
<reference key="18">
    <citation type="journal article" date="2008" name="Hypertension">
        <title>The V433M variant of the CYP4F2 is associated with ischemic stroke in male Swedes beyond its effect on blood pressure.</title>
        <authorList>
            <person name="Fava C."/>
            <person name="Montagnana M."/>
            <person name="Almgren P."/>
            <person name="Rosberg L."/>
            <person name="Lippi G."/>
            <person name="Hedblad B."/>
            <person name="Engstrom G."/>
            <person name="Berglund G."/>
            <person name="Minuz P."/>
            <person name="Melander O."/>
        </authorList>
    </citation>
    <scope>FUNCTION</scope>
    <scope>CHARACTERIZATION OF VARIANT MET-433</scope>
</reference>
<reference key="19">
    <citation type="journal article" date="2008" name="J. Lipid Res.">
        <title>Omega oxidation of 3-hydroxy fatty acids by the human CYP4F gene subfamily enzyme CYP4F11.</title>
        <authorList>
            <person name="Dhar M."/>
            <person name="Sepkovic D.W."/>
            <person name="Hirani V."/>
            <person name="Magnusson R.P."/>
            <person name="Lasker J.M."/>
        </authorList>
    </citation>
    <scope>FUNCTION</scope>
    <scope>CATALYTIC ACTIVITY</scope>
</reference>
<reference key="20">
    <citation type="journal article" date="2008" name="J. Lipid Res.">
        <title>Cytochromes P450 from family 4 are the main omega hydroxylating enzymes in humans: CYP4F3B is the prominent player in PUFA metabolism.</title>
        <authorList>
            <person name="Fer M."/>
            <person name="Corcos L."/>
            <person name="Dreano Y."/>
            <person name="Plee-Gautier E."/>
            <person name="Salaun J.P."/>
            <person name="Berthou F."/>
            <person name="Amet Y."/>
        </authorList>
    </citation>
    <scope>FUNCTION</scope>
    <scope>CATALYTIC ACTIVITY</scope>
</reference>
<reference key="21">
    <citation type="journal article" date="2010" name="J. Nutr.">
        <title>Common variants of cytochrome P450 4F2 exhibit altered vitamin E-{omega}-hydroxylase specific activity.</title>
        <authorList>
            <person name="Bardowell S.A."/>
            <person name="Stec D.E."/>
            <person name="Parker R.S."/>
        </authorList>
    </citation>
    <scope>SUBCELLULAR LOCATION</scope>
</reference>
<reference key="22">
    <citation type="journal article" date="2013" name="Biochemistry">
        <title>Cytochrome P450-dependent catabolism of vitamin K: omega-hydroxylation catalyzed by human CYP4F2 and CYP4F11.</title>
        <authorList>
            <person name="Edson K.Z."/>
            <person name="Prasad B."/>
            <person name="Unadkat J.D."/>
            <person name="Suhara Y."/>
            <person name="Okano T."/>
            <person name="Guengerich F.P."/>
            <person name="Rettie A.E."/>
        </authorList>
    </citation>
    <scope>FUNCTION</scope>
    <scope>SUBCELLULAR LOCATION</scope>
    <scope>CATALYTIC ACTIVITY</scope>
    <scope>BIOPHYSICOCHEMICAL PROPERTIES</scope>
    <scope>IDENTIFICATION BY MASS SPECTROMETRY</scope>
    <scope>PATHWAY</scope>
</reference>
<reference key="23">
    <citation type="journal article" date="2014" name="J. Proteomics">
        <title>An enzyme assisted RP-RPLC approach for in-depth analysis of human liver phosphoproteome.</title>
        <authorList>
            <person name="Bian Y."/>
            <person name="Song C."/>
            <person name="Cheng K."/>
            <person name="Dong M."/>
            <person name="Wang F."/>
            <person name="Huang J."/>
            <person name="Sun D."/>
            <person name="Wang L."/>
            <person name="Ye M."/>
            <person name="Zou H."/>
        </authorList>
    </citation>
    <scope>IDENTIFICATION BY MASS SPECTROMETRY [LARGE SCALE ANALYSIS]</scope>
    <source>
        <tissue>Liver</tissue>
    </source>
</reference>
<reference key="24">
    <citation type="journal article" date="2008" name="Blood">
        <title>CYP4F2 genetic variant alters required warfarin dose.</title>
        <authorList>
            <person name="Caldwell M.D."/>
            <person name="Awad T."/>
            <person name="Johnson J.A."/>
            <person name="Gage B.F."/>
            <person name="Falkowski M."/>
            <person name="Gardina P."/>
            <person name="Hubbard J."/>
            <person name="Turpaz Y."/>
            <person name="Langaee T.Y."/>
            <person name="Eby C."/>
            <person name="King C.R."/>
            <person name="Brower A."/>
            <person name="Schmelzer J.R."/>
            <person name="Glurich I."/>
            <person name="Vidaillet H.J."/>
            <person name="Yale S.H."/>
            <person name="Qi Zhang K."/>
            <person name="Berg R.L."/>
            <person name="Burmester J.K."/>
        </authorList>
    </citation>
    <scope>INVOLVEMENT IN CMRES</scope>
    <scope>CHARACTERIZATION OF VARIANT MET-433</scope>
</reference>
<reference key="25">
    <citation type="journal article" date="2009" name="Blood">
        <title>Pharmacogenetic relevance of CYP4F2 V433M polymorphism on acenocoumarol therapy.</title>
        <authorList>
            <person name="Perez-Andreu V."/>
            <person name="Roldan V."/>
            <person name="Anton A.I."/>
            <person name="Garcia-Barbera N."/>
            <person name="Corral J."/>
            <person name="Vicente V."/>
            <person name="Gonzalez-Conejero R."/>
        </authorList>
    </citation>
    <scope>INVOLVEMENT IN CMRES</scope>
    <scope>CHARACTERIZATION OF VARIANT MET-433</scope>
</reference>
<reference key="26">
    <citation type="journal article" date="2009" name="Mol. Pharmacol.">
        <title>CYP4F2 is a vitamin K1 oxidase: An explanation for altered warfarin dose in carriers of the V433M variant.</title>
        <authorList>
            <person name="McDonald M.G."/>
            <person name="Rieder M.J."/>
            <person name="Nakano M."/>
            <person name="Hsia C.K."/>
            <person name="Rettie A.E."/>
        </authorList>
    </citation>
    <scope>FUNCTION</scope>
    <scope>SUBCELLULAR LOCATION</scope>
    <scope>INVOLVEMENT IN CMRES</scope>
    <scope>CHARACTERIZATION OF VARIANT MET-433</scope>
</reference>
<reference key="27">
    <citation type="journal article" date="2009" name="Pharmacogenomics">
        <title>CYP4F2 genetic variant (rs2108622) significantly contributes to warfarin dosing variability in the Italian population.</title>
        <authorList>
            <person name="Borgiani P."/>
            <person name="Ciccacci C."/>
            <person name="Forte V."/>
            <person name="Sirianni E."/>
            <person name="Novelli L."/>
            <person name="Bramanti P."/>
            <person name="Novelli G."/>
        </authorList>
    </citation>
    <scope>INVOLVEMENT IN CMRES</scope>
    <scope>CHARACTERIZATION OF VARIANT MET-433</scope>
</reference>
<reference key="28">
    <citation type="journal article" date="2010" name="J. Hum. Genet.">
        <title>Worldwide allele frequency distribution of four polymorphisms associated with warfarin dose requirements.</title>
        <authorList>
            <person name="Ross K.A."/>
            <person name="Bigham A.W."/>
            <person name="Edwards M."/>
            <person name="Gozdzik A."/>
            <person name="Suarez-Kurtz G."/>
            <person name="Parra E.J."/>
        </authorList>
    </citation>
    <scope>INVOLVEMENT IN CMRES</scope>
    <scope>CHARACTERIZATION OF VARIANT MET-433</scope>
</reference>
<reference key="29">
    <citation type="journal article" date="2012" name="Clin. Pharmacol. Ther.">
        <title>Impact of the CYP4F2 p.V433M polymorphism on coumarin dose requirement: systematic review and meta-analysis.</title>
        <authorList>
            <person name="Danese E."/>
            <person name="Montagnana M."/>
            <person name="Johnson J.A."/>
            <person name="Rettie A.E."/>
            <person name="Zambon C.F."/>
            <person name="Lubitz S.A."/>
            <person name="Suarez-Kurtz G."/>
            <person name="Cavallari L.H."/>
            <person name="Zhao L."/>
            <person name="Huang M."/>
            <person name="Nakamura Y."/>
            <person name="Mushiroda T."/>
            <person name="Kringen M.K."/>
            <person name="Borgiani P."/>
            <person name="Ciccacci C."/>
            <person name="Au N.T."/>
            <person name="Langaee T."/>
            <person name="Siguret V."/>
            <person name="Loriot M.A."/>
            <person name="Sagreiya H."/>
            <person name="Altman R.B."/>
            <person name="Shahin M.H."/>
            <person name="Scott S.A."/>
            <person name="Khalifa S.I."/>
            <person name="Chowbay B."/>
            <person name="Suriapranata I.M."/>
            <person name="Teichert M."/>
            <person name="Stricker B.H."/>
            <person name="Taljaard M."/>
            <person name="Botton M.R."/>
            <person name="Zhang J.E."/>
            <person name="Pirmohamed M."/>
            <person name="Zhang X."/>
            <person name="Carlquist J.F."/>
            <person name="Horne B.D."/>
            <person name="Lee M.T."/>
            <person name="Pengo V."/>
            <person name="Guidi G.C."/>
            <person name="Minuz P."/>
            <person name="Fava C."/>
        </authorList>
    </citation>
    <scope>INVOLVEMENT IN CMRES</scope>
    <scope>CHARACTERIZATION OF VARIANT MET-433</scope>
</reference>
<organism>
    <name type="scientific">Homo sapiens</name>
    <name type="common">Human</name>
    <dbReference type="NCBI Taxonomy" id="9606"/>
    <lineage>
        <taxon>Eukaryota</taxon>
        <taxon>Metazoa</taxon>
        <taxon>Chordata</taxon>
        <taxon>Craniata</taxon>
        <taxon>Vertebrata</taxon>
        <taxon>Euteleostomi</taxon>
        <taxon>Mammalia</taxon>
        <taxon>Eutheria</taxon>
        <taxon>Euarchontoglires</taxon>
        <taxon>Primates</taxon>
        <taxon>Haplorrhini</taxon>
        <taxon>Catarrhini</taxon>
        <taxon>Hominidae</taxon>
        <taxon>Homo</taxon>
    </lineage>
</organism>
<evidence type="ECO:0000250" key="1">
    <source>
        <dbReference type="UniProtKB" id="P24464"/>
    </source>
</evidence>
<evidence type="ECO:0000269" key="2">
    <source>
    </source>
</evidence>
<evidence type="ECO:0000269" key="3">
    <source>
    </source>
</evidence>
<evidence type="ECO:0000269" key="4">
    <source>
    </source>
</evidence>
<evidence type="ECO:0000269" key="5">
    <source>
    </source>
</evidence>
<evidence type="ECO:0000269" key="6">
    <source>
    </source>
</evidence>
<evidence type="ECO:0000269" key="7">
    <source>
    </source>
</evidence>
<evidence type="ECO:0000269" key="8">
    <source>
    </source>
</evidence>
<evidence type="ECO:0000269" key="9">
    <source>
    </source>
</evidence>
<evidence type="ECO:0000269" key="10">
    <source>
    </source>
</evidence>
<evidence type="ECO:0000269" key="11">
    <source>
    </source>
</evidence>
<evidence type="ECO:0000269" key="12">
    <source>
    </source>
</evidence>
<evidence type="ECO:0000269" key="13">
    <source>
    </source>
</evidence>
<evidence type="ECO:0000269" key="14">
    <source>
    </source>
</evidence>
<evidence type="ECO:0000269" key="15">
    <source>
    </source>
</evidence>
<evidence type="ECO:0000269" key="16">
    <source>
    </source>
</evidence>
<evidence type="ECO:0000269" key="17">
    <source>
    </source>
</evidence>
<evidence type="ECO:0000269" key="18">
    <source>
    </source>
</evidence>
<evidence type="ECO:0000269" key="19">
    <source>
    </source>
</evidence>
<evidence type="ECO:0000269" key="20">
    <source>
    </source>
</evidence>
<evidence type="ECO:0000269" key="21">
    <source>
    </source>
</evidence>
<evidence type="ECO:0000269" key="22">
    <source>
    </source>
</evidence>
<evidence type="ECO:0000269" key="23">
    <source>
    </source>
</evidence>
<evidence type="ECO:0000269" key="24">
    <source>
    </source>
</evidence>
<evidence type="ECO:0000269" key="25">
    <source ref="5"/>
</evidence>
<evidence type="ECO:0000303" key="26">
    <source>
    </source>
</evidence>
<evidence type="ECO:0000303" key="27">
    <source>
    </source>
</evidence>
<evidence type="ECO:0000303" key="28">
    <source>
    </source>
</evidence>
<evidence type="ECO:0000303" key="29">
    <source>
    </source>
</evidence>
<evidence type="ECO:0000305" key="30"/>
<evidence type="ECO:0000305" key="31">
    <source>
    </source>
</evidence>
<evidence type="ECO:0000305" key="32">
    <source>
    </source>
</evidence>
<evidence type="ECO:0000305" key="33">
    <source>
    </source>
</evidence>
<evidence type="ECO:0000305" key="34">
    <source>
    </source>
</evidence>
<evidence type="ECO:0000305" key="35">
    <source>
    </source>
</evidence>
<evidence type="ECO:0000305" key="36">
    <source>
    </source>
</evidence>
<evidence type="ECO:0000305" key="37">
    <source>
    </source>
</evidence>
<evidence type="ECO:0000305" key="38">
    <source>
    </source>
</evidence>
<evidence type="ECO:0000305" key="39">
    <source>
    </source>
</evidence>
<evidence type="ECO:0000305" key="40">
    <source>
    </source>
</evidence>
<evidence type="ECO:0000312" key="41">
    <source>
        <dbReference type="HGNC" id="HGNC:2645"/>
    </source>
</evidence>
<dbReference type="EC" id="1.14.14.1" evidence="3 5 22 23"/>
<dbReference type="EC" id="1.14.14.79" evidence="15"/>
<dbReference type="EC" id="1.14.14.94" evidence="23 24"/>
<dbReference type="EC" id="1.14.14.78" evidence="22"/>
<dbReference type="EMBL" id="D26480">
    <property type="protein sequence ID" value="BAA05490.1"/>
    <property type="molecule type" value="mRNA"/>
</dbReference>
<dbReference type="EMBL" id="AB015306">
    <property type="protein sequence ID" value="BAA75823.1"/>
    <property type="molecule type" value="Genomic_DNA"/>
</dbReference>
<dbReference type="EMBL" id="U02388">
    <property type="protein sequence ID" value="AAC50052.2"/>
    <property type="molecule type" value="mRNA"/>
</dbReference>
<dbReference type="EMBL" id="AK290790">
    <property type="protein sequence ID" value="BAF83479.1"/>
    <property type="molecule type" value="mRNA"/>
</dbReference>
<dbReference type="EMBL" id="AK300961">
    <property type="protein sequence ID" value="BAG62587.1"/>
    <property type="molecule type" value="mRNA"/>
</dbReference>
<dbReference type="EMBL" id="AF467894">
    <property type="protein sequence ID" value="AAL67578.1"/>
    <property type="molecule type" value="Genomic_DNA"/>
</dbReference>
<dbReference type="EMBL" id="AC005336">
    <property type="protein sequence ID" value="AAC27730.1"/>
    <property type="molecule type" value="Genomic_DNA"/>
</dbReference>
<dbReference type="EMBL" id="AC004791">
    <property type="status" value="NOT_ANNOTATED_CDS"/>
    <property type="molecule type" value="Genomic_DNA"/>
</dbReference>
<dbReference type="EMBL" id="CH471106">
    <property type="protein sequence ID" value="EAW84509.1"/>
    <property type="molecule type" value="Genomic_DNA"/>
</dbReference>
<dbReference type="EMBL" id="CH471106">
    <property type="protein sequence ID" value="EAW84510.1"/>
    <property type="molecule type" value="Genomic_DNA"/>
</dbReference>
<dbReference type="EMBL" id="BC067437">
    <property type="protein sequence ID" value="AAH67437.1"/>
    <property type="molecule type" value="mRNA"/>
</dbReference>
<dbReference type="EMBL" id="BC067439">
    <property type="protein sequence ID" value="AAH67439.1"/>
    <property type="molecule type" value="mRNA"/>
</dbReference>
<dbReference type="EMBL" id="BC067440">
    <property type="protein sequence ID" value="AAH67440.1"/>
    <property type="molecule type" value="mRNA"/>
</dbReference>
<dbReference type="EMBL" id="AF221943">
    <property type="protein sequence ID" value="AAF86378.1"/>
    <property type="molecule type" value="Genomic_DNA"/>
</dbReference>
<dbReference type="CCDS" id="CCDS12336.1">
    <molecule id="P78329-1"/>
</dbReference>
<dbReference type="PIR" id="S45702">
    <property type="entry name" value="S45702"/>
</dbReference>
<dbReference type="RefSeq" id="NP_001073.3">
    <molecule id="P78329-1"/>
    <property type="nucleotide sequence ID" value="NM_001082.4"/>
</dbReference>
<dbReference type="SMR" id="P78329"/>
<dbReference type="BioGRID" id="114099">
    <property type="interactions" value="38"/>
</dbReference>
<dbReference type="FunCoup" id="P78329">
    <property type="interactions" value="232"/>
</dbReference>
<dbReference type="IntAct" id="P78329">
    <property type="interactions" value="45"/>
</dbReference>
<dbReference type="STRING" id="9606.ENSP00000221700"/>
<dbReference type="BindingDB" id="P78329"/>
<dbReference type="ChEMBL" id="CHEMBL3379"/>
<dbReference type="DrugBank" id="DB14003">
    <property type="generic name" value="alpha-Tocopherol acetate"/>
</dbReference>
<dbReference type="DrugBank" id="DB12151">
    <property type="generic name" value="Brincidofovir"/>
</dbReference>
<dbReference type="DrugBank" id="DB08868">
    <property type="generic name" value="Fingolimod"/>
</dbReference>
<dbReference type="DrugBank" id="DB09148">
    <property type="generic name" value="Florbetaben F-18"/>
</dbReference>
<dbReference type="DrugBank" id="DB01026">
    <property type="generic name" value="Ketoconazole"/>
</dbReference>
<dbReference type="DrugBank" id="DB09568">
    <property type="generic name" value="Omega-3-carboxylic acids"/>
</dbReference>
<dbReference type="DrugBank" id="DB01022">
    <property type="generic name" value="Phylloquinone"/>
</dbReference>
<dbReference type="DrugBank" id="DB11635">
    <property type="generic name" value="Tocofersolan"/>
</dbReference>
<dbReference type="DrugBank" id="DB11251">
    <property type="generic name" value="Tocopherol"/>
</dbReference>
<dbReference type="DrugBank" id="DB15636">
    <property type="generic name" value="Zilucoplan"/>
</dbReference>
<dbReference type="GuidetoPHARMACOLOGY" id="1344"/>
<dbReference type="SwissLipids" id="SLP:000000421"/>
<dbReference type="GlyGen" id="P78329">
    <property type="glycosylation" value="1 site, 1 N-linked glycan (1 site)"/>
</dbReference>
<dbReference type="iPTMnet" id="P78329"/>
<dbReference type="PhosphoSitePlus" id="P78329"/>
<dbReference type="BioMuta" id="CYP4F2"/>
<dbReference type="DMDM" id="6166044"/>
<dbReference type="jPOST" id="P78329"/>
<dbReference type="MassIVE" id="P78329"/>
<dbReference type="PaxDb" id="9606-ENSP00000221700"/>
<dbReference type="PeptideAtlas" id="P78329"/>
<dbReference type="ProteomicsDB" id="5249"/>
<dbReference type="ProteomicsDB" id="57568">
    <molecule id="P78329-1"/>
</dbReference>
<dbReference type="Pumba" id="P78329"/>
<dbReference type="Antibodypedia" id="2706">
    <property type="antibodies" value="146 antibodies from 27 providers"/>
</dbReference>
<dbReference type="DNASU" id="8529"/>
<dbReference type="Ensembl" id="ENST00000221700.11">
    <molecule id="P78329-1"/>
    <property type="protein sequence ID" value="ENSP00000221700.3"/>
    <property type="gene ID" value="ENSG00000186115.13"/>
</dbReference>
<dbReference type="GeneID" id="8529"/>
<dbReference type="KEGG" id="hsa:8529"/>
<dbReference type="MANE-Select" id="ENST00000221700.11">
    <property type="protein sequence ID" value="ENSP00000221700.3"/>
    <property type="RefSeq nucleotide sequence ID" value="NM_001082.5"/>
    <property type="RefSeq protein sequence ID" value="NP_001073.3"/>
</dbReference>
<dbReference type="UCSC" id="uc002nbs.2">
    <molecule id="P78329-1"/>
    <property type="organism name" value="human"/>
</dbReference>
<dbReference type="AGR" id="HGNC:2645"/>
<dbReference type="CTD" id="8529"/>
<dbReference type="DisGeNET" id="8529"/>
<dbReference type="GeneCards" id="CYP4F2"/>
<dbReference type="HGNC" id="HGNC:2645">
    <property type="gene designation" value="CYP4F2"/>
</dbReference>
<dbReference type="HPA" id="ENSG00000186115">
    <property type="expression patterns" value="Tissue enhanced (intestine, kidney, liver)"/>
</dbReference>
<dbReference type="MalaCards" id="CYP4F2"/>
<dbReference type="MIM" id="122700">
    <property type="type" value="phenotype"/>
</dbReference>
<dbReference type="MIM" id="604426">
    <property type="type" value="gene"/>
</dbReference>
<dbReference type="neXtProt" id="NX_P78329"/>
<dbReference type="OpenTargets" id="ENSG00000186115"/>
<dbReference type="PharmGKB" id="PA27121"/>
<dbReference type="VEuPathDB" id="HostDB:ENSG00000186115"/>
<dbReference type="eggNOG" id="KOG0157">
    <property type="taxonomic scope" value="Eukaryota"/>
</dbReference>
<dbReference type="GeneTree" id="ENSGT00940000154646"/>
<dbReference type="HOGENOM" id="CLU_001570_5_1_1"/>
<dbReference type="InParanoid" id="P78329"/>
<dbReference type="OMA" id="IDVQKWM"/>
<dbReference type="OrthoDB" id="1470350at2759"/>
<dbReference type="PAN-GO" id="P78329">
    <property type="GO annotations" value="7 GO annotations based on evolutionary models"/>
</dbReference>
<dbReference type="PhylomeDB" id="P78329"/>
<dbReference type="TreeFam" id="TF105088"/>
<dbReference type="BioCyc" id="MetaCyc:HS02675-MONOMER"/>
<dbReference type="BRENDA" id="1.14.14.94">
    <property type="organism ID" value="2681"/>
</dbReference>
<dbReference type="PathwayCommons" id="P78329"/>
<dbReference type="Reactome" id="R-HSA-211935">
    <property type="pathway name" value="Fatty acids"/>
</dbReference>
<dbReference type="Reactome" id="R-HSA-211958">
    <property type="pathway name" value="Miscellaneous substrates"/>
</dbReference>
<dbReference type="Reactome" id="R-HSA-211979">
    <property type="pathway name" value="Eicosanoids"/>
</dbReference>
<dbReference type="Reactome" id="R-HSA-2142691">
    <property type="pathway name" value="Synthesis of Leukotrienes (LT) and Eoxins (EX)"/>
</dbReference>
<dbReference type="Reactome" id="R-HSA-2142816">
    <property type="pathway name" value="Synthesis of (16-20)-hydroxyeicosatetraenoic acids (HETE)"/>
</dbReference>
<dbReference type="SignaLink" id="P78329"/>
<dbReference type="UniPathway" id="UPA00383"/>
<dbReference type="UniPathway" id="UPA00883"/>
<dbReference type="UniPathway" id="UPA01054"/>
<dbReference type="BioGRID-ORCS" id="8529">
    <property type="hits" value="36 hits in 1140 CRISPR screens"/>
</dbReference>
<dbReference type="ChiTaRS" id="CYP4F2">
    <property type="organism name" value="human"/>
</dbReference>
<dbReference type="GeneWiki" id="CYP4F2"/>
<dbReference type="GenomeRNAi" id="8529"/>
<dbReference type="Pharos" id="P78329">
    <property type="development level" value="Tchem"/>
</dbReference>
<dbReference type="PRO" id="PR:P78329"/>
<dbReference type="Proteomes" id="UP000005640">
    <property type="component" value="Chromosome 19"/>
</dbReference>
<dbReference type="RNAct" id="P78329">
    <property type="molecule type" value="protein"/>
</dbReference>
<dbReference type="Bgee" id="ENSG00000186115">
    <property type="expression patterns" value="Expressed in jejunal mucosa and 112 other cell types or tissues"/>
</dbReference>
<dbReference type="ExpressionAtlas" id="P78329">
    <property type="expression patterns" value="baseline and differential"/>
</dbReference>
<dbReference type="GO" id="GO:0016324">
    <property type="term" value="C:apical plasma membrane"/>
    <property type="evidence" value="ECO:0000314"/>
    <property type="project" value="UniProtKB"/>
</dbReference>
<dbReference type="GO" id="GO:0005737">
    <property type="term" value="C:cytoplasm"/>
    <property type="evidence" value="ECO:0000314"/>
    <property type="project" value="UniProtKB"/>
</dbReference>
<dbReference type="GO" id="GO:0005789">
    <property type="term" value="C:endoplasmic reticulum membrane"/>
    <property type="evidence" value="ECO:0000304"/>
    <property type="project" value="UniProtKB"/>
</dbReference>
<dbReference type="GO" id="GO:0043231">
    <property type="term" value="C:intracellular membrane-bounded organelle"/>
    <property type="evidence" value="ECO:0000314"/>
    <property type="project" value="UniProtKB"/>
</dbReference>
<dbReference type="GO" id="GO:0097259">
    <property type="term" value="F:20-aldehyde-leukotriene B4 20-monooxygenase activity"/>
    <property type="evidence" value="ECO:0000304"/>
    <property type="project" value="Reactome"/>
</dbReference>
<dbReference type="GO" id="GO:0097258">
    <property type="term" value="F:20-hydroxy-leukotriene B4 omega oxidase activity"/>
    <property type="evidence" value="ECO:0000304"/>
    <property type="project" value="Reactome"/>
</dbReference>
<dbReference type="GO" id="GO:0018685">
    <property type="term" value="F:alkane 1-monooxygenase activity"/>
    <property type="evidence" value="ECO:0000314"/>
    <property type="project" value="BHF-UCL"/>
</dbReference>
<dbReference type="GO" id="GO:0052871">
    <property type="term" value="F:alpha-tocopherol omega-hydroxylase activity"/>
    <property type="evidence" value="ECO:0000314"/>
    <property type="project" value="UniProtKB"/>
</dbReference>
<dbReference type="GO" id="GO:0008392">
    <property type="term" value="F:arachidonate epoxygenase activity"/>
    <property type="evidence" value="ECO:0000314"/>
    <property type="project" value="UniProtKB"/>
</dbReference>
<dbReference type="GO" id="GO:0052869">
    <property type="term" value="F:arachidonate omega-hydroxylase activity"/>
    <property type="evidence" value="ECO:0000314"/>
    <property type="project" value="UniProtKB"/>
</dbReference>
<dbReference type="GO" id="GO:0020037">
    <property type="term" value="F:heme binding"/>
    <property type="evidence" value="ECO:0007669"/>
    <property type="project" value="InterPro"/>
</dbReference>
<dbReference type="GO" id="GO:0005506">
    <property type="term" value="F:iron ion binding"/>
    <property type="evidence" value="ECO:0007669"/>
    <property type="project" value="InterPro"/>
</dbReference>
<dbReference type="GO" id="GO:0050051">
    <property type="term" value="F:leukotriene-B4 20-monooxygenase activity"/>
    <property type="evidence" value="ECO:0000314"/>
    <property type="project" value="UniProtKB"/>
</dbReference>
<dbReference type="GO" id="GO:0102033">
    <property type="term" value="F:long-chain fatty acid omega-hydroxylase activity"/>
    <property type="evidence" value="ECO:0000314"/>
    <property type="project" value="UniProtKB"/>
</dbReference>
<dbReference type="GO" id="GO:0004497">
    <property type="term" value="F:monooxygenase activity"/>
    <property type="evidence" value="ECO:0000304"/>
    <property type="project" value="Reactome"/>
</dbReference>
<dbReference type="GO" id="GO:0016709">
    <property type="term" value="F:oxidoreductase activity, acting on paired donors, with incorporation or reduction of molecular oxygen, NAD(P)H as one donor, and incorporation of one atom of oxygen"/>
    <property type="evidence" value="ECO:0000314"/>
    <property type="project" value="UniProtKB"/>
</dbReference>
<dbReference type="GO" id="GO:0019369">
    <property type="term" value="P:arachidonate metabolic process"/>
    <property type="evidence" value="ECO:0000314"/>
    <property type="project" value="UniProtKB"/>
</dbReference>
<dbReference type="GO" id="GO:0007596">
    <property type="term" value="P:blood coagulation"/>
    <property type="evidence" value="ECO:0000304"/>
    <property type="project" value="UniProtKB"/>
</dbReference>
<dbReference type="GO" id="GO:0019373">
    <property type="term" value="P:epoxygenase P450 pathway"/>
    <property type="evidence" value="ECO:0000314"/>
    <property type="project" value="UniProtKB"/>
</dbReference>
<dbReference type="GO" id="GO:0010430">
    <property type="term" value="P:fatty acid omega-oxidation"/>
    <property type="evidence" value="ECO:0000314"/>
    <property type="project" value="UniProtKB"/>
</dbReference>
<dbReference type="GO" id="GO:0006690">
    <property type="term" value="P:icosanoid metabolic process"/>
    <property type="evidence" value="ECO:0000304"/>
    <property type="project" value="Reactome"/>
</dbReference>
<dbReference type="GO" id="GO:0036101">
    <property type="term" value="P:leukotriene B4 catabolic process"/>
    <property type="evidence" value="ECO:0000314"/>
    <property type="project" value="UniProtKB"/>
</dbReference>
<dbReference type="GO" id="GO:0006691">
    <property type="term" value="P:leukotriene metabolic process"/>
    <property type="evidence" value="ECO:0000304"/>
    <property type="project" value="Reactome"/>
</dbReference>
<dbReference type="GO" id="GO:0001676">
    <property type="term" value="P:long-chain fatty acid metabolic process"/>
    <property type="evidence" value="ECO:0000314"/>
    <property type="project" value="BHF-UCL"/>
</dbReference>
<dbReference type="GO" id="GO:0042361">
    <property type="term" value="P:menaquinone catabolic process"/>
    <property type="evidence" value="ECO:0000314"/>
    <property type="project" value="UniProtKB"/>
</dbReference>
<dbReference type="GO" id="GO:0032304">
    <property type="term" value="P:negative regulation of icosanoid secretion"/>
    <property type="evidence" value="ECO:0000315"/>
    <property type="project" value="UniProtKB"/>
</dbReference>
<dbReference type="GO" id="GO:0097267">
    <property type="term" value="P:omega-hydroxylase P450 pathway"/>
    <property type="evidence" value="ECO:0000314"/>
    <property type="project" value="UniProtKB"/>
</dbReference>
<dbReference type="GO" id="GO:0042376">
    <property type="term" value="P:phylloquinone catabolic process"/>
    <property type="evidence" value="ECO:0000314"/>
    <property type="project" value="UniProtKB"/>
</dbReference>
<dbReference type="GO" id="GO:0032305">
    <property type="term" value="P:positive regulation of icosanoid secretion"/>
    <property type="evidence" value="ECO:0000315"/>
    <property type="project" value="UniProtKB"/>
</dbReference>
<dbReference type="GO" id="GO:0003095">
    <property type="term" value="P:pressure natriuresis"/>
    <property type="evidence" value="ECO:0000270"/>
    <property type="project" value="UniProtKB"/>
</dbReference>
<dbReference type="GO" id="GO:0008217">
    <property type="term" value="P:regulation of blood pressure"/>
    <property type="evidence" value="ECO:0000315"/>
    <property type="project" value="UniProtKB"/>
</dbReference>
<dbReference type="GO" id="GO:0003091">
    <property type="term" value="P:renal water homeostasis"/>
    <property type="evidence" value="ECO:0000270"/>
    <property type="project" value="UniProtKB"/>
</dbReference>
<dbReference type="GO" id="GO:0055078">
    <property type="term" value="P:sodium ion homeostasis"/>
    <property type="evidence" value="ECO:0000270"/>
    <property type="project" value="UniProtKB"/>
</dbReference>
<dbReference type="GO" id="GO:0000038">
    <property type="term" value="P:very long-chain fatty acid metabolic process"/>
    <property type="evidence" value="ECO:0000314"/>
    <property type="project" value="BHF-UCL"/>
</dbReference>
<dbReference type="GO" id="GO:0042360">
    <property type="term" value="P:vitamin E metabolic process"/>
    <property type="evidence" value="ECO:0000314"/>
    <property type="project" value="UniProtKB"/>
</dbReference>
<dbReference type="GO" id="GO:0042377">
    <property type="term" value="P:vitamin K catabolic process"/>
    <property type="evidence" value="ECO:0000314"/>
    <property type="project" value="UniProtKB"/>
</dbReference>
<dbReference type="GO" id="GO:0006805">
    <property type="term" value="P:xenobiotic metabolic process"/>
    <property type="evidence" value="ECO:0000315"/>
    <property type="project" value="UniProtKB"/>
</dbReference>
<dbReference type="CDD" id="cd20679">
    <property type="entry name" value="CYP4F"/>
    <property type="match status" value="1"/>
</dbReference>
<dbReference type="FunFam" id="1.10.630.10:FF:000005">
    <property type="entry name" value="cytochrome P450 4F22 isoform X2"/>
    <property type="match status" value="1"/>
</dbReference>
<dbReference type="Gene3D" id="1.10.630.10">
    <property type="entry name" value="Cytochrome P450"/>
    <property type="match status" value="1"/>
</dbReference>
<dbReference type="InterPro" id="IPR001128">
    <property type="entry name" value="Cyt_P450"/>
</dbReference>
<dbReference type="InterPro" id="IPR017972">
    <property type="entry name" value="Cyt_P450_CS"/>
</dbReference>
<dbReference type="InterPro" id="IPR002401">
    <property type="entry name" value="Cyt_P450_E_grp-I"/>
</dbReference>
<dbReference type="InterPro" id="IPR036396">
    <property type="entry name" value="Cyt_P450_sf"/>
</dbReference>
<dbReference type="InterPro" id="IPR050196">
    <property type="entry name" value="Cytochrome_P450_Monoox"/>
</dbReference>
<dbReference type="PANTHER" id="PTHR24291:SF124">
    <property type="entry name" value="CYTOCHROME P450 4F2"/>
    <property type="match status" value="1"/>
</dbReference>
<dbReference type="PANTHER" id="PTHR24291">
    <property type="entry name" value="CYTOCHROME P450 FAMILY 4"/>
    <property type="match status" value="1"/>
</dbReference>
<dbReference type="Pfam" id="PF00067">
    <property type="entry name" value="p450"/>
    <property type="match status" value="1"/>
</dbReference>
<dbReference type="PRINTS" id="PR00463">
    <property type="entry name" value="EP450I"/>
</dbReference>
<dbReference type="PRINTS" id="PR00385">
    <property type="entry name" value="P450"/>
</dbReference>
<dbReference type="SUPFAM" id="SSF48264">
    <property type="entry name" value="Cytochrome P450"/>
    <property type="match status" value="1"/>
</dbReference>
<dbReference type="PROSITE" id="PS00086">
    <property type="entry name" value="CYTOCHROME_P450"/>
    <property type="match status" value="1"/>
</dbReference>
<name>CP4F2_HUMAN</name>
<keyword id="KW-0025">Alternative splicing</keyword>
<keyword id="KW-0903">Direct protein sequencing</keyword>
<keyword id="KW-0256">Endoplasmic reticulum</keyword>
<keyword id="KW-0276">Fatty acid metabolism</keyword>
<keyword id="KW-0349">Heme</keyword>
<keyword id="KW-0408">Iron</keyword>
<keyword id="KW-0443">Lipid metabolism</keyword>
<keyword id="KW-0472">Membrane</keyword>
<keyword id="KW-0479">Metal-binding</keyword>
<keyword id="KW-0492">Microsome</keyword>
<keyword id="KW-0503">Monooxygenase</keyword>
<keyword id="KW-0560">Oxidoreductase</keyword>
<keyword id="KW-1267">Proteomics identification</keyword>
<keyword id="KW-1185">Reference proteome</keyword>
<feature type="propeptide" id="PRO_0000430581" evidence="24">
    <location>
        <begin position="1"/>
        <end position="4"/>
    </location>
</feature>
<feature type="chain" id="PRO_0000051850" description="Cytochrome P450 4F2">
    <location>
        <begin position="5"/>
        <end position="520"/>
    </location>
</feature>
<feature type="binding site" description="covalent" evidence="1">
    <location>
        <position position="328"/>
    </location>
    <ligand>
        <name>heme</name>
        <dbReference type="ChEBI" id="CHEBI:30413"/>
    </ligand>
</feature>
<feature type="binding site" description="axial binding residue" evidence="1">
    <location>
        <position position="468"/>
    </location>
    <ligand>
        <name>heme</name>
        <dbReference type="ChEBI" id="CHEBI:30413"/>
    </ligand>
    <ligandPart>
        <name>Fe</name>
        <dbReference type="ChEBI" id="CHEBI:18248"/>
    </ligandPart>
</feature>
<feature type="splice variant" id="VSP_055578" description="In isoform 2." evidence="28">
    <location>
        <begin position="1"/>
        <end position="149"/>
    </location>
</feature>
<feature type="splice variant" id="VSP_055579" description="In isoform 2." evidence="28">
    <original>DEDGKKLSDEDIRAEADTFMFEGHDTTASGLSW</original>
    <variation>AMTPRPVVSPGSCTTLQSTQNTRSAAGRRCKNF</variation>
    <location>
        <begin position="307"/>
        <end position="339"/>
    </location>
</feature>
<feature type="splice variant" id="VSP_055580" description="In isoform 2." evidence="28">
    <location>
        <begin position="340"/>
        <end position="520"/>
    </location>
</feature>
<feature type="sequence variant" id="VAR_013116" description="In dbSNP:rs3093104." evidence="25">
    <original>S</original>
    <variation>Y</variation>
    <location>
        <position position="7"/>
    </location>
</feature>
<feature type="sequence variant" id="VAR_013117" description="In dbSNP:rs3093105." evidence="8 24 25">
    <original>W</original>
    <variation>G</variation>
    <location>
        <position position="12"/>
    </location>
</feature>
<feature type="sequence variant" id="VAR_013118" description="In dbSNP:rs3093153." evidence="6 25">
    <original>G</original>
    <variation>V</variation>
    <location>
        <position position="185"/>
    </location>
</feature>
<feature type="sequence variant" id="VAR_020125" description="In dbSNP:rs1599353639.">
    <original>A</original>
    <variation>D</variation>
    <location>
        <position position="269"/>
    </location>
</feature>
<feature type="sequence variant" id="VAR_013119" description="Risk factor for coumarin resistance; increased warfarin maintenance dose in patients on warfarin anti-coagulant therapy due to decreased vitamin K catabolism; decreased phylloquinone omega-hydroxylase activity; decreased production of 20-hydroxyeicosatetraenoic acid (20-HETE); dbSNP:rs2108622." evidence="8 10 13 14 16 17 18 19 21 25">
    <original>V</original>
    <variation>M</variation>
    <location>
        <position position="433"/>
    </location>
</feature>
<feature type="sequence variant" id="VAR_013120" description="In dbSNP:rs3093200." evidence="25">
    <original>L</original>
    <variation>M</variation>
    <location>
        <position position="519"/>
    </location>
</feature>
<feature type="sequence conflict" description="In Ref. 3; AAC50052 and 9; AAF86378." evidence="30" ref="3 9">
    <original>WP</original>
    <variation>CR</variation>
    <location>
        <begin position="12"/>
        <end position="13"/>
    </location>
</feature>
<feature type="sequence conflict" description="In Ref. 8; AAH67437." evidence="30" ref="8">
    <original>V</original>
    <variation>A</variation>
    <location>
        <position position="25"/>
    </location>
</feature>
<feature type="sequence conflict" description="In Ref. 8; AAH67440." evidence="30" ref="8">
    <original>E</original>
    <variation>D</variation>
    <location>
        <position position="169"/>
    </location>
</feature>
<feature type="sequence conflict" description="In Ref. 3; AAC50052." evidence="30" ref="3">
    <original>G</original>
    <variation>V</variation>
    <location>
        <position position="336"/>
    </location>
</feature>
<feature type="sequence conflict" description="In Ref. 3; AAC50052." evidence="30" ref="3">
    <original>L</original>
    <variation>V</variation>
    <location>
        <position position="391"/>
    </location>
</feature>
<protein>
    <recommendedName>
        <fullName evidence="29">Cytochrome P450 4F2</fullName>
        <ecNumber evidence="3 5 22 23">1.14.14.1</ecNumber>
    </recommendedName>
    <alternativeName>
        <fullName evidence="27">20-hydroxyeicosatetraenoic acid synthase</fullName>
        <shortName evidence="27">20-HETE synthase</shortName>
    </alternativeName>
    <alternativeName>
        <fullName evidence="27">Arachidonic acid omega-hydroxylase</fullName>
    </alternativeName>
    <alternativeName>
        <fullName>CYPIVF2</fullName>
    </alternativeName>
    <alternativeName>
        <fullName>Cytochrome P450-LTB-omega</fullName>
    </alternativeName>
    <alternativeName>
        <fullName>Docosahexaenoic acid omega-hydroxylase</fullName>
        <ecNumber evidence="15">1.14.14.79</ecNumber>
    </alternativeName>
    <alternativeName>
        <fullName>Leukotriene-B(4) 20-monooxygenase 1</fullName>
    </alternativeName>
    <alternativeName>
        <fullName evidence="30">Leukotriene-B(4) omega-hydroxylase 1</fullName>
        <ecNumber evidence="23 24">1.14.14.94</ecNumber>
    </alternativeName>
    <alternativeName>
        <fullName evidence="30">Phylloquinone omega-hydroxylase CYP4F2</fullName>
        <ecNumber evidence="22">1.14.14.78</ecNumber>
    </alternativeName>
</protein>
<gene>
    <name evidence="26 41" type="primary">CYP4F2</name>
</gene>
<accession>P78329</accession>
<accession>A0A024R7K3</accession>
<accession>A8K425</accession>
<accession>B4DV75</accession>
<accession>Q16677</accession>
<accession>Q6NWT4</accession>
<accession>Q6NWT6</accession>
<accession>Q9NNZ0</accession>
<accession>Q9UIU8</accession>
<sequence>MSQLSLSWLGLWPVAASPWLLLLLVGASWLLAHVLAWTYAFYDNCRRLRCFPQPPRRNWFWGHQGMVNPTEEGMRVLTQLVATYPQGFKVWMGPISPLLSLCHPDIIRSVINASAAIAPKDKFFYSFLEPWLGDGLLLSAGDKWSRHRRMLTPAFHFNILKPYMKIFNESVNIMHAKWQLLASEGSACLDMFEHISLMTLDSLQKCVFSFDSHCQEKPSEYIAAILELSALVSKRHHEILLHIDFLYYLTPDGQRFRRACRLVHDFTDAVIQERRRTLPSQGVDDFLQAKAKSKTLDFIDVLLLSKDEDGKKLSDEDIRAEADTFMFEGHDTTASGLSWVLYHLAKHPEYQERCRQEVQELLKDREPKEIEWDDLAHLPFLTMCMKESLRLHPPVPVISRHVTQDIVLPDGRVIPKGIICLISVFGTHHNPAVWPDPEVYDPFRFDPENIKERSPLAFIPFSAGPRNCIGQTFAMAEMKVVLALTLLRFRVLPDHTEPRRKPELVLRAEGGLWLRVEPLS</sequence>
<comment type="function">
    <text evidence="3 4 5 7 9 10 11 12 14 15 18 22 23 24">A cytochrome P450 monooxygenase involved in the metabolism of various endogenous substrates, including fatty acids, eicosanoids and vitamins (PubMed:10660572, PubMed:10833273, PubMed:11997390, PubMed:17341693, PubMed:18574070, PubMed:18577768). Mechanistically, uses molecular oxygen inserting one oxygen atom into a substrate, and reducing the second into a water molecule, with two electrons provided by NADPH via cytochrome P450 reductase (CPR; NADPH-ferrihemoprotein reductase). Catalyzes predominantly the oxidation of the terminal carbon (omega-oxidation) of long- and very long-chain fatty acids. Displays high omega-hydroxylase activity toward polyunsaturated fatty acids (PUFAs) (PubMed:18577768). Participates in the conversion of arachidonic acid to omega-hydroxyeicosatetraenoic acid (20-HETE), a signaling molecule acting both as vasoconstrictive and natriuretic with overall effect on arterial blood pressure (PubMed:10660572, PubMed:17341693, PubMed:18574070). Plays a role in the oxidative inactivation of eicosanoids, including both pro-inflammatory and anti-inflammatory mediators such as leukotriene B4 (LTB4), lipoxin A4 (LXA4), and several HETEs (PubMed:10660572, PubMed:10833273, PubMed:17341693, PubMed:18574070, PubMed:18577768, PubMed:8026587, PubMed:9799565). Catalyzes omega-hydroxylation of 3-hydroxy fatty acids (PubMed:18065749). Converts monoepoxides of linoleic acid leukotoxin and isoleukotoxin to omega-hydroxylated metabolites (PubMed:15145985). Contributes to the degradation of very long-chain fatty acids (VLCFAs) by catalyzing successive omega-oxidations and chain shortening (PubMed:16547005, PubMed:18182499). Plays an important role in vitamin metabolism by chain shortening. Catalyzes omega-hydroxylation of the phytyl chain of tocopherols (forms of vitamin E), with preference for gamma-tocopherols over alpha-tocopherols, thus promoting retention of alpha-tocopherols in tissues (PubMed:11997390). Omega-hydroxylates and inactivates phylloquinone (vitamin K1), and menaquinone-4 (MK-4, a form of vitamin K2), both acting as cofactors in blood coagulation (PubMed:19297519, PubMed:24138531).</text>
</comment>
<comment type="catalytic activity">
    <reaction evidence="3 5 22 23">
        <text>an organic molecule + reduced [NADPH--hemoprotein reductase] + O2 = an alcohol + oxidized [NADPH--hemoprotein reductase] + H2O + H(+)</text>
        <dbReference type="Rhea" id="RHEA:17149"/>
        <dbReference type="Rhea" id="RHEA-COMP:11964"/>
        <dbReference type="Rhea" id="RHEA-COMP:11965"/>
        <dbReference type="ChEBI" id="CHEBI:15377"/>
        <dbReference type="ChEBI" id="CHEBI:15378"/>
        <dbReference type="ChEBI" id="CHEBI:15379"/>
        <dbReference type="ChEBI" id="CHEBI:30879"/>
        <dbReference type="ChEBI" id="CHEBI:57618"/>
        <dbReference type="ChEBI" id="CHEBI:58210"/>
        <dbReference type="ChEBI" id="CHEBI:142491"/>
        <dbReference type="EC" id="1.14.14.1"/>
    </reaction>
    <physiologicalReaction direction="left-to-right" evidence="31 33 39 40">
        <dbReference type="Rhea" id="RHEA:17150"/>
    </physiologicalReaction>
</comment>
<comment type="catalytic activity">
    <reaction evidence="3 10 15 22">
        <text>(5Z,8Z,11Z,14Z)-eicosatetraenoate + reduced [NADPH--hemoprotein reductase] + O2 = 20-hydroxy-(5Z,8Z,11Z,14Z)-eicosatetraenoate + oxidized [NADPH--hemoprotein reductase] + H2O + H(+)</text>
        <dbReference type="Rhea" id="RHEA:39755"/>
        <dbReference type="Rhea" id="RHEA-COMP:11964"/>
        <dbReference type="Rhea" id="RHEA-COMP:11965"/>
        <dbReference type="ChEBI" id="CHEBI:15377"/>
        <dbReference type="ChEBI" id="CHEBI:15378"/>
        <dbReference type="ChEBI" id="CHEBI:15379"/>
        <dbReference type="ChEBI" id="CHEBI:32395"/>
        <dbReference type="ChEBI" id="CHEBI:57618"/>
        <dbReference type="ChEBI" id="CHEBI:58210"/>
        <dbReference type="ChEBI" id="CHEBI:76624"/>
    </reaction>
    <physiologicalReaction direction="left-to-right" evidence="38">
        <dbReference type="Rhea" id="RHEA:39756"/>
    </physiologicalReaction>
</comment>
<comment type="catalytic activity">
    <reaction evidence="15">
        <text>(5Z,8Z,11Z)-eicosatrienoate + reduced [NADPH--hemoprotein reductase] + O2 = 20-hydroxy-(5Z,8Z,11Z)-eicosatrienoate + oxidized [NADPH--hemoprotein reductase] + H2O + H(+)</text>
        <dbReference type="Rhea" id="RHEA:50164"/>
        <dbReference type="Rhea" id="RHEA-COMP:11964"/>
        <dbReference type="Rhea" id="RHEA-COMP:11965"/>
        <dbReference type="ChEBI" id="CHEBI:15377"/>
        <dbReference type="ChEBI" id="CHEBI:15378"/>
        <dbReference type="ChEBI" id="CHEBI:15379"/>
        <dbReference type="ChEBI" id="CHEBI:57618"/>
        <dbReference type="ChEBI" id="CHEBI:58210"/>
        <dbReference type="ChEBI" id="CHEBI:78043"/>
        <dbReference type="ChEBI" id="CHEBI:132026"/>
    </reaction>
    <physiologicalReaction direction="left-to-right" evidence="38">
        <dbReference type="Rhea" id="RHEA:50165"/>
    </physiologicalReaction>
</comment>
<comment type="catalytic activity">
    <reaction evidence="15">
        <text>(5Z,8Z,11Z,14Z,17Z)-eicosapentaenoate + reduced [NADPH--hemoprotein reductase] + O2 = 20-hydroxy-(5Z,8Z,11Z,14Z,17Z)-eicosapentaenoate + oxidized [NADPH--hemoprotein reductase] + H2O + H(+)</text>
        <dbReference type="Rhea" id="RHEA:39791"/>
        <dbReference type="Rhea" id="RHEA-COMP:11964"/>
        <dbReference type="Rhea" id="RHEA-COMP:11965"/>
        <dbReference type="ChEBI" id="CHEBI:15377"/>
        <dbReference type="ChEBI" id="CHEBI:15378"/>
        <dbReference type="ChEBI" id="CHEBI:15379"/>
        <dbReference type="ChEBI" id="CHEBI:57618"/>
        <dbReference type="ChEBI" id="CHEBI:58210"/>
        <dbReference type="ChEBI" id="CHEBI:58562"/>
        <dbReference type="ChEBI" id="CHEBI:76639"/>
    </reaction>
    <physiologicalReaction direction="left-to-right" evidence="38">
        <dbReference type="Rhea" id="RHEA:39792"/>
    </physiologicalReaction>
</comment>
<comment type="catalytic activity">
    <reaction evidence="15">
        <text>(4Z,7Z,10Z,13Z,16Z,19Z)-docosahexaenoate + reduced [NADPH--hemoprotein reductase] + O2 = 22-hydroxy-(4Z,7Z,10Z,13Z,16Z,19Z)-docosahexaenoate + oxidized [NADPH--hemoprotein reductase] + H2O + H(+)</text>
        <dbReference type="Rhea" id="RHEA:40155"/>
        <dbReference type="Rhea" id="RHEA-COMP:11964"/>
        <dbReference type="Rhea" id="RHEA-COMP:11965"/>
        <dbReference type="ChEBI" id="CHEBI:15377"/>
        <dbReference type="ChEBI" id="CHEBI:15378"/>
        <dbReference type="ChEBI" id="CHEBI:15379"/>
        <dbReference type="ChEBI" id="CHEBI:57618"/>
        <dbReference type="ChEBI" id="CHEBI:58210"/>
        <dbReference type="ChEBI" id="CHEBI:77015"/>
        <dbReference type="ChEBI" id="CHEBI:77016"/>
        <dbReference type="EC" id="1.14.14.79"/>
    </reaction>
    <physiologicalReaction direction="left-to-right" evidence="38">
        <dbReference type="Rhea" id="RHEA:40156"/>
    </physiologicalReaction>
</comment>
<comment type="catalytic activity">
    <reaction evidence="7">
        <text>8,9-epoxy-(5Z,11Z,14Z)-eicosatrienoate + reduced [NADPH--hemoprotein reductase] + O2 = 20-hydroxy-8,9-epoxy-(5Z,11Z,14Z)-eicosatrienoate + oxidized [NADPH--hemoprotein reductase] + H2O + H(+)</text>
        <dbReference type="Rhea" id="RHEA:53572"/>
        <dbReference type="Rhea" id="RHEA-COMP:11964"/>
        <dbReference type="Rhea" id="RHEA-COMP:11965"/>
        <dbReference type="ChEBI" id="CHEBI:15377"/>
        <dbReference type="ChEBI" id="CHEBI:15378"/>
        <dbReference type="ChEBI" id="CHEBI:15379"/>
        <dbReference type="ChEBI" id="CHEBI:57618"/>
        <dbReference type="ChEBI" id="CHEBI:58210"/>
        <dbReference type="ChEBI" id="CHEBI:84025"/>
        <dbReference type="ChEBI" id="CHEBI:137474"/>
    </reaction>
    <physiologicalReaction direction="left-to-right" evidence="34">
        <dbReference type="Rhea" id="RHEA:53573"/>
    </physiologicalReaction>
</comment>
<comment type="catalytic activity">
    <reaction evidence="7">
        <text>(9S,10R)-epoxy-octadecanoate + reduced [NADPH--hemoprotein reductase] + O2 = 18-hydroxy-(9S,10R)-epoxy-octadecanoate + oxidized [NADPH--hemoprotein reductase] + H2O + H(+)</text>
        <dbReference type="Rhea" id="RHEA:53552"/>
        <dbReference type="Rhea" id="RHEA-COMP:11964"/>
        <dbReference type="Rhea" id="RHEA-COMP:11965"/>
        <dbReference type="ChEBI" id="CHEBI:15377"/>
        <dbReference type="ChEBI" id="CHEBI:15378"/>
        <dbReference type="ChEBI" id="CHEBI:15379"/>
        <dbReference type="ChEBI" id="CHEBI:57618"/>
        <dbReference type="ChEBI" id="CHEBI:58210"/>
        <dbReference type="ChEBI" id="CHEBI:137458"/>
        <dbReference type="ChEBI" id="CHEBI:137461"/>
    </reaction>
    <physiologicalReaction direction="left-to-right" evidence="34">
        <dbReference type="Rhea" id="RHEA:53553"/>
    </physiologicalReaction>
</comment>
<comment type="catalytic activity">
    <reaction evidence="7">
        <text>(9R,10S)-epoxy-octadecanoate + reduced [NADPH--hemoprotein reductase] + O2 = 18-hydroxy-(9R,10S)-epoxy-octadecanoate + oxidized [NADPH--hemoprotein reductase] + H2O + H(+)</text>
        <dbReference type="Rhea" id="RHEA:53556"/>
        <dbReference type="Rhea" id="RHEA-COMP:11964"/>
        <dbReference type="Rhea" id="RHEA-COMP:11965"/>
        <dbReference type="ChEBI" id="CHEBI:15377"/>
        <dbReference type="ChEBI" id="CHEBI:15378"/>
        <dbReference type="ChEBI" id="CHEBI:15379"/>
        <dbReference type="ChEBI" id="CHEBI:57618"/>
        <dbReference type="ChEBI" id="CHEBI:58210"/>
        <dbReference type="ChEBI" id="CHEBI:137459"/>
        <dbReference type="ChEBI" id="CHEBI:137460"/>
    </reaction>
    <physiologicalReaction direction="left-to-right" evidence="34">
        <dbReference type="Rhea" id="RHEA:53557"/>
    </physiologicalReaction>
</comment>
<comment type="catalytic activity">
    <reaction evidence="7">
        <text>12,13-epoxy-(9Z)-octadecenoate + reduced [NADPH--hemoprotein reductase] + O2 = 18-hydroxy-12,13-epoxy-(9Z)-octadecenoate + oxidized [NADPH--hemoprotein reductase] + H2O + H(+)</text>
        <dbReference type="Rhea" id="RHEA:53568"/>
        <dbReference type="Rhea" id="RHEA-COMP:11964"/>
        <dbReference type="Rhea" id="RHEA-COMP:11965"/>
        <dbReference type="ChEBI" id="CHEBI:15377"/>
        <dbReference type="ChEBI" id="CHEBI:15378"/>
        <dbReference type="ChEBI" id="CHEBI:15379"/>
        <dbReference type="ChEBI" id="CHEBI:57618"/>
        <dbReference type="ChEBI" id="CHEBI:58210"/>
        <dbReference type="ChEBI" id="CHEBI:84026"/>
        <dbReference type="ChEBI" id="CHEBI:137469"/>
    </reaction>
    <physiologicalReaction direction="left-to-right" evidence="34">
        <dbReference type="Rhea" id="RHEA:53569"/>
    </physiologicalReaction>
</comment>
<comment type="catalytic activity">
    <reaction evidence="7">
        <text>9,10-epoxy-(12Z)-octadecenoate + reduced [NADPH--hemoprotein reductase] + O2 = 18-hydroxy-9,10-epoxy-(12Z)-octadecenoate + oxidized [NADPH--hemoprotein reductase] + H2O + H(+)</text>
        <dbReference type="Rhea" id="RHEA:53564"/>
        <dbReference type="Rhea" id="RHEA-COMP:11964"/>
        <dbReference type="Rhea" id="RHEA-COMP:11965"/>
        <dbReference type="ChEBI" id="CHEBI:15377"/>
        <dbReference type="ChEBI" id="CHEBI:15378"/>
        <dbReference type="ChEBI" id="CHEBI:15379"/>
        <dbReference type="ChEBI" id="CHEBI:57618"/>
        <dbReference type="ChEBI" id="CHEBI:58210"/>
        <dbReference type="ChEBI" id="CHEBI:84023"/>
        <dbReference type="ChEBI" id="CHEBI:137467"/>
    </reaction>
    <physiologicalReaction direction="left-to-right" evidence="34">
        <dbReference type="Rhea" id="RHEA:53565"/>
    </physiologicalReaction>
</comment>
<comment type="catalytic activity">
    <reaction evidence="4">
        <text>8-hydroxy-(5Z,9E,11Z,14Z)-eicosatetraenoate + reduced [NADPH--hemoprotein reductase] + O2 = 8,20-dihydroxy-(5Z,9E,11Z,14Z)-eicosatetraenoate + oxidized [NADPH--hemoprotein reductase] + H2O + H(+)</text>
        <dbReference type="Rhea" id="RHEA:48660"/>
        <dbReference type="Rhea" id="RHEA-COMP:11964"/>
        <dbReference type="Rhea" id="RHEA-COMP:11965"/>
        <dbReference type="ChEBI" id="CHEBI:15377"/>
        <dbReference type="ChEBI" id="CHEBI:15378"/>
        <dbReference type="ChEBI" id="CHEBI:15379"/>
        <dbReference type="ChEBI" id="CHEBI:57618"/>
        <dbReference type="ChEBI" id="CHEBI:58210"/>
        <dbReference type="ChEBI" id="CHEBI:90716"/>
        <dbReference type="ChEBI" id="CHEBI:90717"/>
    </reaction>
    <physiologicalReaction direction="left-to-right" evidence="32">
        <dbReference type="Rhea" id="RHEA:48661"/>
    </physiologicalReaction>
</comment>
<comment type="catalytic activity">
    <reaction evidence="4">
        <text>12-hydroxy-(5Z,8Z,10E,14Z)-eicosatetraenoate + reduced [NADPH--hemoprotein reductase] + O2 = 12,20-dihydroxy-(5Z,8Z,10E,14Z)-eicosatetraenoate + oxidized [NADPH--hemoprotein reductase] + H2O + H(+)</text>
        <dbReference type="Rhea" id="RHEA:48664"/>
        <dbReference type="Rhea" id="RHEA-COMP:11964"/>
        <dbReference type="Rhea" id="RHEA-COMP:11965"/>
        <dbReference type="ChEBI" id="CHEBI:15377"/>
        <dbReference type="ChEBI" id="CHEBI:15378"/>
        <dbReference type="ChEBI" id="CHEBI:15379"/>
        <dbReference type="ChEBI" id="CHEBI:57618"/>
        <dbReference type="ChEBI" id="CHEBI:58210"/>
        <dbReference type="ChEBI" id="CHEBI:90718"/>
        <dbReference type="ChEBI" id="CHEBI:90719"/>
    </reaction>
    <physiologicalReaction direction="left-to-right" evidence="32">
        <dbReference type="Rhea" id="RHEA:48665"/>
    </physiologicalReaction>
</comment>
<comment type="catalytic activity">
    <reaction evidence="4">
        <text>12-hydroxyoctadecanoate + reduced [NADPH--hemoprotein reductase] + O2 = 12,18-dihydroxyoctadecanoate + oxidized [NADPH--hemoprotein reductase] + H2O + H(+)</text>
        <dbReference type="Rhea" id="RHEA:49376"/>
        <dbReference type="Rhea" id="RHEA-COMP:11964"/>
        <dbReference type="Rhea" id="RHEA-COMP:11965"/>
        <dbReference type="ChEBI" id="CHEBI:15377"/>
        <dbReference type="ChEBI" id="CHEBI:15378"/>
        <dbReference type="ChEBI" id="CHEBI:15379"/>
        <dbReference type="ChEBI" id="CHEBI:57618"/>
        <dbReference type="ChEBI" id="CHEBI:58210"/>
        <dbReference type="ChEBI" id="CHEBI:84201"/>
        <dbReference type="ChEBI" id="CHEBI:91294"/>
    </reaction>
    <physiologicalReaction direction="left-to-right" evidence="32">
        <dbReference type="Rhea" id="RHEA:49377"/>
    </physiologicalReaction>
</comment>
<comment type="catalytic activity">
    <reaction evidence="9">
        <text>docosanoate + reduced [NADPH--hemoprotein reductase] + O2 = 22-hydroxydocosanoate + oxidized [NADPH--hemoprotein reductase] + H2O + H(+)</text>
        <dbReference type="Rhea" id="RHEA:40079"/>
        <dbReference type="Rhea" id="RHEA-COMP:11964"/>
        <dbReference type="Rhea" id="RHEA-COMP:11965"/>
        <dbReference type="ChEBI" id="CHEBI:15377"/>
        <dbReference type="ChEBI" id="CHEBI:15378"/>
        <dbReference type="ChEBI" id="CHEBI:15379"/>
        <dbReference type="ChEBI" id="CHEBI:23858"/>
        <dbReference type="ChEBI" id="CHEBI:57618"/>
        <dbReference type="ChEBI" id="CHEBI:58210"/>
        <dbReference type="ChEBI" id="CHEBI:76304"/>
    </reaction>
    <physiologicalReaction direction="left-to-right" evidence="35">
        <dbReference type="Rhea" id="RHEA:40080"/>
    </physiologicalReaction>
</comment>
<comment type="catalytic activity">
    <reaction evidence="12">
        <text>22-hydroxydocosanoate + reduced [NADPH--hemoprotein reductase] + O2 = 22-oxodocosanoate + oxidized [NADPH--hemoprotein reductase] + 2 H2O + H(+)</text>
        <dbReference type="Rhea" id="RHEA:39055"/>
        <dbReference type="Rhea" id="RHEA-COMP:11964"/>
        <dbReference type="Rhea" id="RHEA-COMP:11965"/>
        <dbReference type="ChEBI" id="CHEBI:15377"/>
        <dbReference type="ChEBI" id="CHEBI:15378"/>
        <dbReference type="ChEBI" id="CHEBI:15379"/>
        <dbReference type="ChEBI" id="CHEBI:57618"/>
        <dbReference type="ChEBI" id="CHEBI:58210"/>
        <dbReference type="ChEBI" id="CHEBI:76298"/>
        <dbReference type="ChEBI" id="CHEBI:76304"/>
    </reaction>
    <physiologicalReaction direction="left-to-right" evidence="37">
        <dbReference type="Rhea" id="RHEA:39056"/>
    </physiologicalReaction>
</comment>
<comment type="catalytic activity">
    <reaction evidence="12">
        <text>22-oxodocosanoate + reduced [NADPH--hemoprotein reductase] + O2 = docosanedioate + oxidized [NADPH--hemoprotein reductase] + H2O + 2 H(+)</text>
        <dbReference type="Rhea" id="RHEA:39043"/>
        <dbReference type="Rhea" id="RHEA-COMP:11964"/>
        <dbReference type="Rhea" id="RHEA-COMP:11965"/>
        <dbReference type="ChEBI" id="CHEBI:15377"/>
        <dbReference type="ChEBI" id="CHEBI:15378"/>
        <dbReference type="ChEBI" id="CHEBI:15379"/>
        <dbReference type="ChEBI" id="CHEBI:57618"/>
        <dbReference type="ChEBI" id="CHEBI:58210"/>
        <dbReference type="ChEBI" id="CHEBI:76298"/>
        <dbReference type="ChEBI" id="CHEBI:76299"/>
    </reaction>
    <physiologicalReaction direction="left-to-right" evidence="37">
        <dbReference type="Rhea" id="RHEA:39044"/>
    </physiologicalReaction>
</comment>
<comment type="catalytic activity">
    <reaction evidence="9">
        <text>tetracosanoate + reduced [NADPH--hemoprotein reductase] + O2 = 24-hydroxytetracosanoate + oxidized [NADPH--hemoprotein reductase] + H2O + H(+)</text>
        <dbReference type="Rhea" id="RHEA:39719"/>
        <dbReference type="Rhea" id="RHEA-COMP:11964"/>
        <dbReference type="Rhea" id="RHEA-COMP:11965"/>
        <dbReference type="ChEBI" id="CHEBI:15377"/>
        <dbReference type="ChEBI" id="CHEBI:15378"/>
        <dbReference type="ChEBI" id="CHEBI:15379"/>
        <dbReference type="ChEBI" id="CHEBI:31014"/>
        <dbReference type="ChEBI" id="CHEBI:57618"/>
        <dbReference type="ChEBI" id="CHEBI:58210"/>
        <dbReference type="ChEBI" id="CHEBI:76610"/>
    </reaction>
    <physiologicalReaction direction="left-to-right" evidence="35">
        <dbReference type="Rhea" id="RHEA:39720"/>
    </physiologicalReaction>
</comment>
<comment type="catalytic activity">
    <reaction evidence="9">
        <text>hexacosanoate + reduced [NADPH--hemoprotein reductase] + O2 = 26-hydroxyhexacosanoate + oxidized [NADPH--hemoprotein reductase] + H2O + H(+)</text>
        <dbReference type="Rhea" id="RHEA:40083"/>
        <dbReference type="Rhea" id="RHEA-COMP:11964"/>
        <dbReference type="Rhea" id="RHEA-COMP:11965"/>
        <dbReference type="ChEBI" id="CHEBI:15377"/>
        <dbReference type="ChEBI" id="CHEBI:15378"/>
        <dbReference type="ChEBI" id="CHEBI:15379"/>
        <dbReference type="ChEBI" id="CHEBI:31013"/>
        <dbReference type="ChEBI" id="CHEBI:57618"/>
        <dbReference type="ChEBI" id="CHEBI:58210"/>
        <dbReference type="ChEBI" id="CHEBI:76305"/>
    </reaction>
    <physiologicalReaction direction="left-to-right" evidence="35">
        <dbReference type="Rhea" id="RHEA:40084"/>
    </physiologicalReaction>
</comment>
<comment type="catalytic activity">
    <reaction evidence="9">
        <text>26-hydroxyhexacosanoate + reduced [NADPH--hemoprotein reductase] + O2 = 26-oxohexacosanoate + oxidized [NADPH--hemoprotein reductase] + 2 H2O + H(+)</text>
        <dbReference type="Rhea" id="RHEA:39059"/>
        <dbReference type="Rhea" id="RHEA-COMP:11964"/>
        <dbReference type="Rhea" id="RHEA-COMP:11965"/>
        <dbReference type="ChEBI" id="CHEBI:15377"/>
        <dbReference type="ChEBI" id="CHEBI:15378"/>
        <dbReference type="ChEBI" id="CHEBI:15379"/>
        <dbReference type="ChEBI" id="CHEBI:57618"/>
        <dbReference type="ChEBI" id="CHEBI:58210"/>
        <dbReference type="ChEBI" id="CHEBI:76305"/>
        <dbReference type="ChEBI" id="CHEBI:76311"/>
    </reaction>
    <physiologicalReaction direction="left-to-right" evidence="35">
        <dbReference type="Rhea" id="RHEA:39060"/>
    </physiologicalReaction>
</comment>
<comment type="catalytic activity">
    <reaction evidence="9 12">
        <text>26-oxohexacosanoate + reduced [NADPH--hemoprotein reductase] + O2 = hexacosanedioate + oxidized [NADPH--hemoprotein reductase] + H2O + 2 H(+)</text>
        <dbReference type="Rhea" id="RHEA:39047"/>
        <dbReference type="Rhea" id="RHEA-COMP:11964"/>
        <dbReference type="Rhea" id="RHEA-COMP:11965"/>
        <dbReference type="ChEBI" id="CHEBI:15377"/>
        <dbReference type="ChEBI" id="CHEBI:15378"/>
        <dbReference type="ChEBI" id="CHEBI:15379"/>
        <dbReference type="ChEBI" id="CHEBI:57618"/>
        <dbReference type="ChEBI" id="CHEBI:58210"/>
        <dbReference type="ChEBI" id="CHEBI:76311"/>
        <dbReference type="ChEBI" id="CHEBI:76312"/>
    </reaction>
    <physiologicalReaction direction="left-to-right" evidence="35 37">
        <dbReference type="Rhea" id="RHEA:39048"/>
    </physiologicalReaction>
</comment>
<comment type="catalytic activity">
    <reaction evidence="11">
        <text>3-hydroxyoctadecanoate + reduced [NADPH--hemoprotein reductase] + O2 = 3,18-dihydroxyoctadecanoate + oxidized [NADPH--hemoprotein reductase] + H2O + H(+)</text>
        <dbReference type="Rhea" id="RHEA:39735"/>
        <dbReference type="Rhea" id="RHEA-COMP:11964"/>
        <dbReference type="Rhea" id="RHEA-COMP:11965"/>
        <dbReference type="ChEBI" id="CHEBI:15377"/>
        <dbReference type="ChEBI" id="CHEBI:15378"/>
        <dbReference type="ChEBI" id="CHEBI:15379"/>
        <dbReference type="ChEBI" id="CHEBI:57618"/>
        <dbReference type="ChEBI" id="CHEBI:58210"/>
        <dbReference type="ChEBI" id="CHEBI:76614"/>
        <dbReference type="ChEBI" id="CHEBI:76615"/>
    </reaction>
    <physiologicalReaction direction="left-to-right" evidence="36">
        <dbReference type="Rhea" id="RHEA:39736"/>
    </physiologicalReaction>
</comment>
<comment type="catalytic activity">
    <reaction evidence="11">
        <text>3-hydroxyhexadecanoate + reduced [NADPH--hemoprotein reductase] + O2 = 3,16-dihydroxyhexadecanoate + oxidized [NADPH--hemoprotein reductase] + H2O + H(+)</text>
        <dbReference type="Rhea" id="RHEA:39731"/>
        <dbReference type="Rhea" id="RHEA-COMP:11964"/>
        <dbReference type="Rhea" id="RHEA-COMP:11965"/>
        <dbReference type="ChEBI" id="CHEBI:15377"/>
        <dbReference type="ChEBI" id="CHEBI:15378"/>
        <dbReference type="ChEBI" id="CHEBI:15379"/>
        <dbReference type="ChEBI" id="CHEBI:57618"/>
        <dbReference type="ChEBI" id="CHEBI:58210"/>
        <dbReference type="ChEBI" id="CHEBI:63904"/>
        <dbReference type="ChEBI" id="CHEBI:76613"/>
    </reaction>
    <physiologicalReaction direction="left-to-right" evidence="36">
        <dbReference type="Rhea" id="RHEA:39732"/>
    </physiologicalReaction>
</comment>
<comment type="catalytic activity">
    <reaction evidence="4 23 24">
        <text>leukotriene B4 + reduced [NADPH--hemoprotein reductase] + O2 = 20-hydroxy-leukotriene B4 + oxidized [NADPH--hemoprotein reductase] + H2O + H(+)</text>
        <dbReference type="Rhea" id="RHEA:22176"/>
        <dbReference type="Rhea" id="RHEA-COMP:11964"/>
        <dbReference type="Rhea" id="RHEA-COMP:11965"/>
        <dbReference type="ChEBI" id="CHEBI:15377"/>
        <dbReference type="ChEBI" id="CHEBI:15378"/>
        <dbReference type="ChEBI" id="CHEBI:15379"/>
        <dbReference type="ChEBI" id="CHEBI:57460"/>
        <dbReference type="ChEBI" id="CHEBI:57461"/>
        <dbReference type="ChEBI" id="CHEBI:57618"/>
        <dbReference type="ChEBI" id="CHEBI:58210"/>
        <dbReference type="EC" id="1.14.14.94"/>
    </reaction>
    <physiologicalReaction direction="left-to-right" evidence="40">
        <dbReference type="Rhea" id="RHEA:22177"/>
    </physiologicalReaction>
</comment>
<comment type="catalytic activity">
    <reaction evidence="4">
        <text>6-trans-leukotriene B4 + reduced [NADPH--hemoprotein reductase] + O2 = 20-hydroxy-6-trans-leukotriene B4 + oxidized [NADPH--hemoprotein reductase] + H2O + H(+)</text>
        <dbReference type="Rhea" id="RHEA:48676"/>
        <dbReference type="Rhea" id="RHEA-COMP:11964"/>
        <dbReference type="Rhea" id="RHEA-COMP:11965"/>
        <dbReference type="ChEBI" id="CHEBI:15377"/>
        <dbReference type="ChEBI" id="CHEBI:15378"/>
        <dbReference type="ChEBI" id="CHEBI:15379"/>
        <dbReference type="ChEBI" id="CHEBI:57618"/>
        <dbReference type="ChEBI" id="CHEBI:58210"/>
        <dbReference type="ChEBI" id="CHEBI:90723"/>
        <dbReference type="ChEBI" id="CHEBI:90732"/>
    </reaction>
    <physiologicalReaction direction="left-to-right" evidence="32">
        <dbReference type="Rhea" id="RHEA:48677"/>
    </physiologicalReaction>
</comment>
<comment type="catalytic activity">
    <reaction evidence="4">
        <text>lipoxin A4 + reduced [NADPH--hemoprotein reductase] + O2 = 20-hydroxy-lipoxin A4 + oxidized [NADPH--hemoprotein reductase] + H2O + H(+)</text>
        <dbReference type="Rhea" id="RHEA:48648"/>
        <dbReference type="Rhea" id="RHEA-COMP:11964"/>
        <dbReference type="Rhea" id="RHEA-COMP:11965"/>
        <dbReference type="ChEBI" id="CHEBI:15377"/>
        <dbReference type="ChEBI" id="CHEBI:15378"/>
        <dbReference type="ChEBI" id="CHEBI:15379"/>
        <dbReference type="ChEBI" id="CHEBI:57618"/>
        <dbReference type="ChEBI" id="CHEBI:58210"/>
        <dbReference type="ChEBI" id="CHEBI:67026"/>
        <dbReference type="ChEBI" id="CHEBI:90707"/>
    </reaction>
    <physiologicalReaction direction="left-to-right" evidence="32">
        <dbReference type="Rhea" id="RHEA:48649"/>
    </physiologicalReaction>
</comment>
<comment type="catalytic activity">
    <reaction evidence="22">
        <text>menaquinone-4 + reduced [NADPH--hemoprotein reductase] + O2 = omega-hydroxymenaquinone-4 + oxidized [NADPH--hemoprotein reductase] + H2O + H(+)</text>
        <dbReference type="Rhea" id="RHEA:41520"/>
        <dbReference type="Rhea" id="RHEA-COMP:11964"/>
        <dbReference type="Rhea" id="RHEA-COMP:11965"/>
        <dbReference type="ChEBI" id="CHEBI:15377"/>
        <dbReference type="ChEBI" id="CHEBI:15378"/>
        <dbReference type="ChEBI" id="CHEBI:15379"/>
        <dbReference type="ChEBI" id="CHEBI:57618"/>
        <dbReference type="ChEBI" id="CHEBI:58210"/>
        <dbReference type="ChEBI" id="CHEBI:78277"/>
        <dbReference type="ChEBI" id="CHEBI:78278"/>
        <dbReference type="EC" id="1.14.14.78"/>
    </reaction>
    <physiologicalReaction direction="left-to-right" evidence="39">
        <dbReference type="Rhea" id="RHEA:41521"/>
    </physiologicalReaction>
</comment>
<comment type="catalytic activity">
    <reaction evidence="22">
        <text>phylloquinone + reduced [NADPH--hemoprotein reductase] + O2 = omega-hydroxyphylloquinone + oxidized [NADPH--hemoprotein reductase] + H2O + H(+)</text>
        <dbReference type="Rhea" id="RHEA:41516"/>
        <dbReference type="Rhea" id="RHEA-COMP:11964"/>
        <dbReference type="Rhea" id="RHEA-COMP:11965"/>
        <dbReference type="ChEBI" id="CHEBI:15377"/>
        <dbReference type="ChEBI" id="CHEBI:15378"/>
        <dbReference type="ChEBI" id="CHEBI:15379"/>
        <dbReference type="ChEBI" id="CHEBI:18067"/>
        <dbReference type="ChEBI" id="CHEBI:57618"/>
        <dbReference type="ChEBI" id="CHEBI:58210"/>
        <dbReference type="ChEBI" id="CHEBI:78276"/>
        <dbReference type="EC" id="1.14.14.78"/>
    </reaction>
    <physiologicalReaction direction="left-to-right" evidence="39">
        <dbReference type="Rhea" id="RHEA:41517"/>
    </physiologicalReaction>
</comment>
<comment type="catalytic activity">
    <reaction evidence="5">
        <text>(+)-alpha-tocopherol + reduced [NADPH--hemoprotein reductase] + O2 = 13-hydroxy-alpha-tocopherol + oxidized [NADPH--hemoprotein reductase] + H2O + H(+)</text>
        <dbReference type="Rhea" id="RHEA:45108"/>
        <dbReference type="Rhea" id="RHEA-COMP:11964"/>
        <dbReference type="Rhea" id="RHEA-COMP:11965"/>
        <dbReference type="ChEBI" id="CHEBI:15377"/>
        <dbReference type="ChEBI" id="CHEBI:15378"/>
        <dbReference type="ChEBI" id="CHEBI:15379"/>
        <dbReference type="ChEBI" id="CHEBI:18145"/>
        <dbReference type="ChEBI" id="CHEBI:57618"/>
        <dbReference type="ChEBI" id="CHEBI:58210"/>
        <dbReference type="ChEBI" id="CHEBI:84962"/>
    </reaction>
    <physiologicalReaction direction="left-to-right" evidence="33">
        <dbReference type="Rhea" id="RHEA:45109"/>
    </physiologicalReaction>
</comment>
<comment type="catalytic activity">
    <reaction evidence="5">
        <text>gamma-tocopherol + NADPH + O2 + H(+) = 13-hydroxy-gamma-tocopherol + NADP(+) + H2O</text>
        <dbReference type="Rhea" id="RHEA:45112"/>
        <dbReference type="ChEBI" id="CHEBI:15377"/>
        <dbReference type="ChEBI" id="CHEBI:15378"/>
        <dbReference type="ChEBI" id="CHEBI:15379"/>
        <dbReference type="ChEBI" id="CHEBI:18185"/>
        <dbReference type="ChEBI" id="CHEBI:57783"/>
        <dbReference type="ChEBI" id="CHEBI:58349"/>
        <dbReference type="ChEBI" id="CHEBI:84963"/>
    </reaction>
    <physiologicalReaction direction="left-to-right" evidence="33">
        <dbReference type="Rhea" id="RHEA:45113"/>
    </physiologicalReaction>
</comment>
<comment type="cofactor">
    <cofactor evidence="1">
        <name>heme</name>
        <dbReference type="ChEBI" id="CHEBI:30413"/>
    </cofactor>
</comment>
<comment type="activity regulation">
    <text evidence="5">Inhibited by dietary sesamin.</text>
</comment>
<comment type="biophysicochemical properties">
    <kinetics>
        <KM evidence="9">0.5 uM for docosanoate</KM>
        <KM evidence="9">1.1 uM for tetracosanoate</KM>
        <KM evidence="9">1.9 uM for hexacosanoate</KM>
        <KM evidence="4">75.2 uM for 12-hydroxyoctadecanoate</KM>
        <KM evidence="4">19 uM for 8-HETE</KM>
        <KM evidence="4">42.3 uM for 12-HETE</KM>
        <KM evidence="12">37.6 uM for 22-hydroxydocosanoate</KM>
        <KM evidence="12">8.8 uM for 26-hydroxyhexacosanoate</KM>
        <KM evidence="7">26.1 uM for 9(10)-epoxyoctadecanoate</KM>
        <KM evidence="7">163.1 uM for 9(10)-epoxy-(12Z)-octadecenoate</KM>
        <KM evidence="7">135 uM for 12(13)-epoxy-(9Z)-octadecenoate</KM>
        <KM evidence="4">60 uM for leukotriene B4</KM>
        <KM evidence="4">55.6 uM for 6-trans-leukotriene B4</KM>
        <KM evidence="4">58.2 uM for lipoxin A4</KM>
        <KM evidence="22">1.7 uM for menaquinone-4 (MK-4)</KM>
        <KM evidence="5">21 uM for alpha-tocopherol</KM>
        <KM evidence="5">37 uM for gamma-tocopherol</KM>
        <Vmax evidence="9">1.6 pmol/min/pmol enzyme toward docosanoate</Vmax>
        <Vmax evidence="9">1.6 pmol/min/pmol enzyme toward tetracosanoate</Vmax>
        <Vmax evidence="9">0.9 pmol/min/pmol enzyme toward hexacosanoate</Vmax>
        <Vmax evidence="4">7.0 nmol/min/nmol enzyme toward 12-hydroxyoctadecanoate</Vmax>
        <Vmax evidence="4">4.0 nmol/min/nmol enzyme toward 8-HETE</Vmax>
        <Vmax evidence="4">2.9 nmol/min/nmol enzyme toward 12-HETE</Vmax>
        <Vmax evidence="12">1.6 pmol/min/pmol enzyme toward 22-hydroxydocosanoate</Vmax>
        <Vmax evidence="12">0.7 pmol/min/pmol enzyme toward 26-hydroxyhexacosanoate</Vmax>
        <Vmax evidence="7">7.9 nmol/min/nmol enzyme toward 9(10)-epoxyoctadecanoate</Vmax>
        <Vmax evidence="7">10.6 nmol/min/nmol enzyme toward 9(10)-epoxy-(12Z)-octadecenoate</Vmax>
        <Vmax evidence="7">0.84 nmol/min/nmol enzyme toward 12(13)-epoxy-(9Z)-octadecenoate</Vmax>
        <Vmax evidence="4">2.7 nmol/min/nmol enzyme toward leukotriene B4</Vmax>
        <Vmax evidence="4">11.9 nmol/min/nmol enzyme toward 6-trans-leukotriene B4</Vmax>
        <Vmax evidence="4">5.5 nmol/min/nmol enzyme toward lipoxin A4</Vmax>
        <Vmax evidence="5">0.16 nmol/min/nmol enzyme toward alpha-tocopherol</Vmax>
        <Vmax evidence="5">1.99 nmol/min/nmol enzyme toward gamma-tocopherol</Vmax>
        <text evidence="9 22">kcat is 0.067 min(-1) with menaquinone-4 (MK-4) as substrate (PubMed:24138531). The omega-hydroxylation of VLCFAs follows dual-enzyme Michaelis-Menten kinetics, suggesting simultaneous binding of two substrate molecules. The high affinity Michaelis-Menten constants are shown (PubMed:16547005).</text>
    </kinetics>
</comment>
<comment type="pathway">
    <text evidence="4">Lipid metabolism; arachidonate metabolism.</text>
</comment>
<comment type="pathway">
    <text evidence="4">Lipid metabolism; leukotriene B4 degradation.</text>
</comment>
<comment type="pathway">
    <text evidence="22">Cofactor degradation; phylloquinone degradation.</text>
</comment>
<comment type="interaction">
    <interactant intactId="EBI-1752413">
        <id>P78329</id>
    </interactant>
    <interactant intactId="EBI-13059134">
        <id>Q13520</id>
        <label>AQP6</label>
    </interactant>
    <organismsDiffer>false</organismsDiffer>
    <experiments>3</experiments>
</comment>
<comment type="interaction">
    <interactant intactId="EBI-1752413">
        <id>P78329</id>
    </interactant>
    <interactant intactId="EBI-18013275">
        <id>Q7Z7G2</id>
        <label>CPLX4</label>
    </interactant>
    <organismsDiffer>false</organismsDiffer>
    <experiments>3</experiments>
</comment>
<comment type="interaction">
    <interactant intactId="EBI-1752413">
        <id>P78329</id>
    </interactant>
    <interactant intactId="EBI-625022">
        <id>O43889-2</id>
        <label>CREB3</label>
    </interactant>
    <organismsDiffer>false</organismsDiffer>
    <experiments>3</experiments>
</comment>
<comment type="interaction">
    <interactant intactId="EBI-1752413">
        <id>P78329</id>
    </interactant>
    <interactant intactId="EBI-6942903">
        <id>Q96BA8</id>
        <label>CREB3L1</label>
    </interactant>
    <organismsDiffer>false</organismsDiffer>
    <experiments>3</experiments>
</comment>
<comment type="interaction">
    <interactant intactId="EBI-1752413">
        <id>P78329</id>
    </interactant>
    <interactant intactId="EBI-296550">
        <id>Q96KC8</id>
        <label>DNAJC1</label>
    </interactant>
    <organismsDiffer>false</organismsDiffer>
    <experiments>3</experiments>
</comment>
<comment type="interaction">
    <interactant intactId="EBI-1752413">
        <id>P78329</id>
    </interactant>
    <interactant intactId="EBI-3915253">
        <id>Q15125</id>
        <label>EBP</label>
    </interactant>
    <organismsDiffer>false</organismsDiffer>
    <experiments>3</experiments>
</comment>
<comment type="interaction">
    <interactant intactId="EBI-1752413">
        <id>P78329</id>
    </interactant>
    <interactant intactId="EBI-18535450">
        <id>Q9GZR5</id>
        <label>ELOVL4</label>
    </interactant>
    <organismsDiffer>false</organismsDiffer>
    <experiments>3</experiments>
</comment>
<comment type="interaction">
    <interactant intactId="EBI-1752413">
        <id>P78329</id>
    </interactant>
    <interactant intactId="EBI-781551">
        <id>Q9Y282</id>
        <label>ERGIC3</label>
    </interactant>
    <organismsDiffer>false</organismsDiffer>
    <experiments>3</experiments>
</comment>
<comment type="interaction">
    <interactant intactId="EBI-1752413">
        <id>P78329</id>
    </interactant>
    <interactant intactId="EBI-18938272">
        <id>Q96KR6</id>
        <label>FAM210B</label>
    </interactant>
    <organismsDiffer>false</organismsDiffer>
    <experiments>3</experiments>
</comment>
<comment type="interaction">
    <interactant intactId="EBI-1752413">
        <id>P78329</id>
    </interactant>
    <interactant intactId="EBI-17458373">
        <id>P48165</id>
        <label>GJA8</label>
    </interactant>
    <organismsDiffer>false</organismsDiffer>
    <experiments>3</experiments>
</comment>
<comment type="interaction">
    <interactant intactId="EBI-1752413">
        <id>P78329</id>
    </interactant>
    <interactant intactId="EBI-18053395">
        <id>Q7Z5P4</id>
        <label>HSD17B13</label>
    </interactant>
    <organismsDiffer>false</organismsDiffer>
    <experiments>3</experiments>
</comment>
<comment type="interaction">
    <interactant intactId="EBI-1752413">
        <id>P78329</id>
    </interactant>
    <interactant intactId="EBI-10266796">
        <id>Q8N5M9</id>
        <label>JAGN1</label>
    </interactant>
    <organismsDiffer>false</organismsDiffer>
    <experiments>3</experiments>
</comment>
<comment type="interaction">
    <interactant intactId="EBI-1752413">
        <id>P78329</id>
    </interactant>
    <interactant intactId="EBI-750776">
        <id>O95214</id>
        <label>LEPROTL1</label>
    </interactant>
    <organismsDiffer>false</organismsDiffer>
    <experiments>3</experiments>
</comment>
<comment type="interaction">
    <interactant intactId="EBI-1752413">
        <id>P78329</id>
    </interactant>
    <interactant intactId="EBI-17873222">
        <id>Q15546</id>
        <label>MMD</label>
    </interactant>
    <organismsDiffer>false</organismsDiffer>
    <experiments>3</experiments>
</comment>
<comment type="interaction">
    <interactant intactId="EBI-1752413">
        <id>P78329</id>
    </interactant>
    <interactant intactId="EBI-3923617">
        <id>Q9H2K0</id>
        <label>MTIF3</label>
    </interactant>
    <organismsDiffer>false</organismsDiffer>
    <experiments>3</experiments>
</comment>
<comment type="interaction">
    <interactant intactId="EBI-1752413">
        <id>P78329</id>
    </interactant>
    <interactant intactId="EBI-17263240">
        <id>P15941-11</id>
        <label>MUC1</label>
    </interactant>
    <organismsDiffer>false</organismsDiffer>
    <experiments>3</experiments>
</comment>
<comment type="interaction">
    <interactant intactId="EBI-1752413">
        <id>P78329</id>
    </interactant>
    <interactant intactId="EBI-389883">
        <id>P16333</id>
        <label>NCK1</label>
    </interactant>
    <organismsDiffer>false</organismsDiffer>
    <experiments>2</experiments>
</comment>
<comment type="interaction">
    <interactant intactId="EBI-1752413">
        <id>P78329</id>
    </interactant>
    <interactant intactId="EBI-1050125">
        <id>O15173</id>
        <label>PGRMC2</label>
    </interactant>
    <organismsDiffer>false</organismsDiffer>
    <experiments>3</experiments>
</comment>
<comment type="interaction">
    <interactant intactId="EBI-1752413">
        <id>P78329</id>
    </interactant>
    <interactant intactId="EBI-949945">
        <id>Q53GL0</id>
        <label>PLEKHO1</label>
    </interactant>
    <organismsDiffer>false</organismsDiffer>
    <experiments>3</experiments>
</comment>
<comment type="interaction">
    <interactant intactId="EBI-1752413">
        <id>P78329</id>
    </interactant>
    <interactant intactId="EBI-11337973">
        <id>Q9BRK0</id>
        <label>REEP2</label>
    </interactant>
    <organismsDiffer>false</organismsDiffer>
    <experiments>3</experiments>
</comment>
<comment type="interaction">
    <interactant intactId="EBI-1752413">
        <id>P78329</id>
    </interactant>
    <interactant intactId="EBI-7545592">
        <id>Q9H6H4</id>
        <label>REEP4</label>
    </interactant>
    <organismsDiffer>false</organismsDiffer>
    <experiments>3</experiments>
</comment>
<comment type="interaction">
    <interactant intactId="EBI-1752413">
        <id>P78329</id>
    </interactant>
    <interactant intactId="EBI-10192441">
        <id>Q86VR2</id>
        <label>RETREG3</label>
    </interactant>
    <organismsDiffer>false</organismsDiffer>
    <experiments>3</experiments>
</comment>
<comment type="interaction">
    <interactant intactId="EBI-1752413">
        <id>P78329</id>
    </interactant>
    <interactant intactId="EBI-9395257">
        <id>Q03395</id>
        <label>ROM1</label>
    </interactant>
    <organismsDiffer>false</organismsDiffer>
    <experiments>3</experiments>
</comment>
<comment type="interaction">
    <interactant intactId="EBI-1752413">
        <id>P78329</id>
    </interactant>
    <interactant intactId="EBI-17247926">
        <id>Q9NY72</id>
        <label>SCN3B</label>
    </interactant>
    <organismsDiffer>false</organismsDiffer>
    <experiments>3</experiments>
</comment>
<comment type="interaction">
    <interactant intactId="EBI-1752413">
        <id>P78329</id>
    </interactant>
    <interactant intactId="EBI-713250">
        <id>Q9NX18</id>
        <label>SDHAF2</label>
    </interactant>
    <organismsDiffer>false</organismsDiffer>
    <experiments>3</experiments>
</comment>
<comment type="interaction">
    <interactant intactId="EBI-1752413">
        <id>P78329</id>
    </interactant>
    <interactant intactId="EBI-18159983">
        <id>Q3KNW5</id>
        <label>SLC10A6</label>
    </interactant>
    <organismsDiffer>false</organismsDiffer>
    <experiments>3</experiments>
</comment>
<comment type="interaction">
    <interactant intactId="EBI-1752413">
        <id>P78329</id>
    </interactant>
    <interactant intactId="EBI-17249797">
        <id>Q8NDX2-2</id>
        <label>SLC17A8</label>
    </interactant>
    <organismsDiffer>false</organismsDiffer>
    <experiments>3</experiments>
</comment>
<comment type="interaction">
    <interactant intactId="EBI-1752413">
        <id>P78329</id>
    </interactant>
    <interactant intactId="EBI-3923779">
        <id>Q9BZV2</id>
        <label>SLC19A3</label>
    </interactant>
    <organismsDiffer>false</organismsDiffer>
    <experiments>3</experiments>
</comment>
<comment type="interaction">
    <interactant intactId="EBI-1752413">
        <id>P78329</id>
    </interactant>
    <interactant intactId="EBI-18082698">
        <id>Q96QE2</id>
        <label>SLC2A13</label>
    </interactant>
    <organismsDiffer>false</organismsDiffer>
    <experiments>3</experiments>
</comment>
<comment type="interaction">
    <interactant intactId="EBI-1752413">
        <id>P78329</id>
    </interactant>
    <interactant intactId="EBI-10819434">
        <id>Q9NPE6</id>
        <label>SPAG4</label>
    </interactant>
    <organismsDiffer>false</organismsDiffer>
    <experiments>3</experiments>
</comment>
<comment type="interaction">
    <interactant intactId="EBI-1752413">
        <id>P78329</id>
    </interactant>
    <interactant intactId="EBI-726691">
        <id>Q8WY91</id>
        <label>THAP4</label>
    </interactant>
    <organismsDiffer>false</organismsDiffer>
    <experiments>3</experiments>
</comment>
<comment type="interaction">
    <interactant intactId="EBI-1752413">
        <id>P78329</id>
    </interactant>
    <interactant intactId="EBI-12947623">
        <id>Q96MV1</id>
        <label>TLCD4</label>
    </interactant>
    <organismsDiffer>false</organismsDiffer>
    <experiments>3</experiments>
</comment>
<comment type="interaction">
    <interactant intactId="EBI-1752413">
        <id>P78329</id>
    </interactant>
    <interactant intactId="EBI-6448756">
        <id>Q96DZ7</id>
        <label>TM4SF19</label>
    </interactant>
    <organismsDiffer>false</organismsDiffer>
    <experiments>3</experiments>
</comment>
<comment type="interaction">
    <interactant intactId="EBI-1752413">
        <id>P78329</id>
    </interactant>
    <interactant intactId="EBI-726044">
        <id>Q9NW97</id>
        <label>TMEM51</label>
    </interactant>
    <organismsDiffer>false</organismsDiffer>
    <experiments>3</experiments>
</comment>
<comment type="interaction">
    <interactant intactId="EBI-1752413">
        <id>P78329</id>
    </interactant>
    <interactant intactId="EBI-6447886">
        <id>Q9Y320</id>
        <label>TMX2</label>
    </interactant>
    <organismsDiffer>false</organismsDiffer>
    <experiments>3</experiments>
</comment>
<comment type="interaction">
    <interactant intactId="EBI-1752413">
        <id>P78329</id>
    </interactant>
    <interactant intactId="EBI-17678331">
        <id>Q12999</id>
        <label>TSPAN31</label>
    </interactant>
    <organismsDiffer>false</organismsDiffer>
    <experiments>3</experiments>
</comment>
<comment type="interaction">
    <interactant intactId="EBI-1752413">
        <id>P78329</id>
    </interactant>
    <interactant intactId="EBI-10180829">
        <id>Q7KZS0</id>
        <label>UBE2I</label>
    </interactant>
    <organismsDiffer>false</organismsDiffer>
    <experiments>3</experiments>
</comment>
<comment type="interaction">
    <interactant intactId="EBI-1752413">
        <id>P78329</id>
    </interactant>
    <interactant intactId="EBI-12837904">
        <id>Q96MV8</id>
        <label>ZDHHC15</label>
    </interactant>
    <organismsDiffer>false</organismsDiffer>
    <experiments>3</experiments>
</comment>
<comment type="subcellular location">
    <subcellularLocation>
        <location evidence="18 22 23">Microsome membrane</location>
        <topology evidence="30">Peripheral membrane protein</topology>
    </subcellularLocation>
    <subcellularLocation>
        <location evidence="20">Endoplasmic reticulum membrane</location>
        <topology evidence="30">Peripheral membrane protein</topology>
    </subcellularLocation>
</comment>
<comment type="alternative products">
    <event type="alternative splicing"/>
    <isoform>
        <id>P78329-1</id>
        <name>1</name>
        <sequence type="displayed"/>
    </isoform>
    <isoform>
        <id>P78329-2</id>
        <name>2</name>
        <sequence type="described" ref="VSP_055578 VSP_055579 VSP_055580"/>
    </isoform>
</comment>
<comment type="tissue specificity">
    <text evidence="2 3">Liver. Also present in kidney: specifically expressed in the S2 and S3 segments of proximal tubules in cortex and outer medulla (PubMed:10660572).</text>
</comment>
<comment type="disease" evidence="13 16 17 18 19 21 22">
    <disease id="DI-01438">
        <name>Coumarin resistance</name>
        <acronym>CMRES</acronym>
        <description>A condition characterized by partial or complete resistance to warfarin or other 4-hydroxycoumarin derivatives. These drugs are used as anti-coagulants for the prevention of thromboembolic diseases in subjects with deep vein thrombosis, atrial fibrillation, or mechanical heart valve replacement.</description>
        <dbReference type="MIM" id="122700"/>
    </disease>
    <text evidence="22">Disease susceptibility may be associated with variants affecting the gene represented in this entry. The variant Met-433 is associated with coumarin (the brand name of warfarin) resistance by increasing coumarin maintenance dose in patients on this anti-coagulant therapy. This is probably due to decreased activity of the phylloquinone omega-hydroxylase activity, leading to an increase in hepatic vitamin K levels that warfarin must antagonize (PubMed:24138531).</text>
</comment>
<comment type="similarity">
    <text evidence="30">Belongs to the cytochrome P450 family.</text>
</comment>
<proteinExistence type="evidence at protein level"/>